<organism>
    <name type="scientific">Homo sapiens</name>
    <name type="common">Human</name>
    <dbReference type="NCBI Taxonomy" id="9606"/>
    <lineage>
        <taxon>Eukaryota</taxon>
        <taxon>Metazoa</taxon>
        <taxon>Chordata</taxon>
        <taxon>Craniata</taxon>
        <taxon>Vertebrata</taxon>
        <taxon>Euteleostomi</taxon>
        <taxon>Mammalia</taxon>
        <taxon>Eutheria</taxon>
        <taxon>Euarchontoglires</taxon>
        <taxon>Primates</taxon>
        <taxon>Haplorrhini</taxon>
        <taxon>Catarrhini</taxon>
        <taxon>Hominidae</taxon>
        <taxon>Homo</taxon>
    </lineage>
</organism>
<comment type="function">
    <text evidence="1 30 34 43">Hydrolyzes the non-reducing end N-acetyl-D-hexosamine and/or sulfated N-acetyl-D-hexosamine of glycoconjugates, such as the oligosaccharide moieties from proteins and neutral glycolipids, or from certain mucopolysaccharides (PubMed:11707436, PubMed:8123671, PubMed:8672428, PubMed:9694901). The isozyme S is as active as the isozyme A on the anionic bis-sulfated glycans, the chondroitin-6-sulfate trisaccharide (C6S-3), and the dermatan sulfate pentasaccharide, and the sulfated glycosphingolipid SM2 (PubMed:11707436). The isozyme B does not hydrolyze each of these substrates, however hydrolyzes efficiently neutral oligosaccharide (PubMed:11707436). Only the isozyme A is responsible for the degradation of GM2 gangliosides in the presence of GM2A (PubMed:8123671, PubMed:8672428, PubMed:9694901).</text>
</comment>
<comment type="catalytic activity">
    <reaction evidence="1 30 34 43">
        <text>Hydrolysis of terminal non-reducing N-acetyl-D-hexosamine residues in N-acetyl-beta-D-hexosaminides.</text>
        <dbReference type="EC" id="3.2.1.52"/>
    </reaction>
</comment>
<comment type="catalytic activity">
    <reaction evidence="1">
        <text>N-acetyl-beta-D-galactosaminyl-(1-&gt;4)-beta-D-3-sulfogalactosyl-(1-&gt;4)-beta-D-glucosyl-(1&lt;-&gt;1')-ceramide + H2O = a beta-D-3-sulfogalactosyl-(1-&gt;4)-beta-D-glucosyl-(1&lt;-&gt;1')-ceramide + N-acetyl-beta-D-galactosamine</text>
        <dbReference type="Rhea" id="RHEA:48276"/>
        <dbReference type="ChEBI" id="CHEBI:15377"/>
        <dbReference type="ChEBI" id="CHEBI:28497"/>
        <dbReference type="ChEBI" id="CHEBI:90163"/>
        <dbReference type="ChEBI" id="CHEBI:90164"/>
    </reaction>
    <physiologicalReaction direction="left-to-right" evidence="47">
        <dbReference type="Rhea" id="RHEA:48277"/>
    </physiologicalReaction>
</comment>
<comment type="catalytic activity">
    <reaction evidence="30 34 43">
        <text>a ganglioside GM2 (d18:1(4E)) + H2O = a ganglioside GM3 (d18:1(4E)) + N-acetyl-beta-D-galactosamine</text>
        <dbReference type="Rhea" id="RHEA:47940"/>
        <dbReference type="ChEBI" id="CHEBI:15377"/>
        <dbReference type="ChEBI" id="CHEBI:28497"/>
        <dbReference type="ChEBI" id="CHEBI:60065"/>
        <dbReference type="ChEBI" id="CHEBI:71502"/>
    </reaction>
    <physiologicalReaction direction="left-to-right" evidence="49">
        <dbReference type="Rhea" id="RHEA:47941"/>
    </physiologicalReaction>
</comment>
<comment type="catalytic activity">
    <reaction evidence="30 34 43">
        <text>a ganglioside GM2 + H2O = a ganglioside GM3 + N-acetyl-beta-D-galactosamine</text>
        <dbReference type="Rhea" id="RHEA:47968"/>
        <dbReference type="ChEBI" id="CHEBI:15377"/>
        <dbReference type="ChEBI" id="CHEBI:28497"/>
        <dbReference type="ChEBI" id="CHEBI:79210"/>
        <dbReference type="ChEBI" id="CHEBI:79218"/>
    </reaction>
    <physiologicalReaction direction="left-to-right" evidence="49">
        <dbReference type="Rhea" id="RHEA:47969"/>
    </physiologicalReaction>
</comment>
<comment type="catalytic activity">
    <reaction evidence="1">
        <text>beta-D-GalNAc-(1-&gt;4)-alpha-L-IdoA-(1-&gt;3)-beta-D-GalNAc-4-sulfate-(1-&gt;4)-alpha-L-IdoA-(1-&gt;3)-D-GalNAc-4-sulfate + H2O = alpha-L-IdoA-(1-&gt;3)-beta-D-GalNAc-4-sulfate-(1-&gt;4)-alpha-L-IdoA-(1-&gt;3)-D-GalNAc-4-sulfate + N-acetyl-D-galactosamine</text>
        <dbReference type="Rhea" id="RHEA:64372"/>
        <dbReference type="ChEBI" id="CHEBI:15377"/>
        <dbReference type="ChEBI" id="CHEBI:28037"/>
        <dbReference type="ChEBI" id="CHEBI:152565"/>
        <dbReference type="ChEBI" id="CHEBI:152566"/>
    </reaction>
    <physiologicalReaction direction="left-to-right" evidence="47">
        <dbReference type="Rhea" id="RHEA:64373"/>
    </physiologicalReaction>
</comment>
<comment type="catalytic activity">
    <reaction evidence="1">
        <text>N-acetyl-beta-D-6-sulfogalactosaminyl-(1-&gt;4)-alpha-L-iduronyl-(1-&gt;3)-N-acetyl-D-6-sulfogalactosamine + H2O = alpha-L-iduronyl-(1-&gt;3)-N-acetyl-D-6-sulfogalactosamine + N-acetyl-D-6-sulfogalactosamine</text>
        <dbReference type="Rhea" id="RHEA:64384"/>
        <dbReference type="ChEBI" id="CHEBI:15377"/>
        <dbReference type="ChEBI" id="CHEBI:152567"/>
        <dbReference type="ChEBI" id="CHEBI:152568"/>
        <dbReference type="ChEBI" id="CHEBI:153064"/>
    </reaction>
    <physiologicalReaction direction="left-to-right" evidence="47">
        <dbReference type="Rhea" id="RHEA:64385"/>
    </physiologicalReaction>
</comment>
<comment type="activity regulation">
    <text evidence="1">Addition of GM2A stimulates the hydrolysis of sulfated glycosphingolipid SM2 and the ganglioside GM2.</text>
</comment>
<comment type="subunit">
    <text evidence="10 34">There are 3 beta-hexosaminidase isozymes: isozyme A (hexosaminidase A) is a heterodimer composed of one subunit alpha and one subunit beta (chain A and B); isozyme B (hexosaminidase B) is a homodimer of two beta subunits (two chains A and B); isozyme S (hexosaminidase S) is a homodimer of two alpha subunits (PubMed:16698036). The composition of the dimer (isozyme A versus isozyme S) has a significant effect on the substrate specificity of the alpha subunit active site (PubMed:8672428).</text>
</comment>
<comment type="interaction">
    <interactant intactId="EBI-723519">
        <id>P06865</id>
    </interactant>
    <interactant intactId="EBI-7133736">
        <id>P07686</id>
        <label>HEXB</label>
    </interactant>
    <organismsDiffer>false</organismsDiffer>
    <experiments>5</experiments>
</comment>
<comment type="subcellular location">
    <subcellularLocation>
        <location>Lysosome</location>
    </subcellularLocation>
</comment>
<comment type="alternative products">
    <event type="alternative splicing"/>
    <isoform>
        <id>P06865-1</id>
        <name>1</name>
        <sequence type="displayed"/>
    </isoform>
    <isoform>
        <id>P06865-2</id>
        <name>2</name>
        <sequence type="described" ref="VSP_056657 VSP_056658 VSP_056659"/>
    </isoform>
</comment>
<comment type="PTM">
    <text evidence="8 10 14 47">N-linked glycan at Asn-115 consists of Man(3)-GlcNAc(2) (Probable) (PubMed:1533633, PubMed:16698036, PubMed:19159218). N-linked glycan at Asn-157 consists of either GlcNAc or GlcNAc(2)-Man(7-9). N-linked glycan at Asn-295 consists of either GlcNAc, GlcNAc-Fuc, or GlcNAc(2)-Man(4) (Probable).</text>
</comment>
<comment type="disease" evidence="2 3 4 6 7 13 15 16 17 18 19 23 25 26 27 29 31 32 33 35 36 38 39 40 41 42">
    <disease id="DI-00536">
        <name>GM2-gangliosidosis 1</name>
        <acronym>GM2G1</acronym>
        <description>An autosomal recessive lysosomal storage disease marked by the accumulation of GM2 gangliosides in the neuronal cells. It is characterized by GM2 gangliosides accumulation in the absence of HEXA activity, leading to neurodegeneration and, in the infantile form, death in early childhood. It exists in several forms: infantile (most common and most severe), juvenile and adult (late-onset).</description>
        <dbReference type="MIM" id="272800"/>
    </disease>
    <text>The disease is caused by variants affecting the gene represented in this entry.</text>
</comment>
<comment type="similarity">
    <text evidence="46">Belongs to the glycosyl hydrolase 20 family.</text>
</comment>
<accession>P06865</accession>
<accession>B4DKE7</accession>
<accession>E7ENH7</accession>
<accession>Q53HS8</accession>
<accession>Q6AI32</accession>
<dbReference type="EC" id="3.2.1.52" evidence="1 30 34 43"/>
<dbReference type="EMBL" id="M16424">
    <property type="protein sequence ID" value="AAB00965.1"/>
    <property type="molecule type" value="Genomic_DNA"/>
</dbReference>
<dbReference type="EMBL" id="M16411">
    <property type="protein sequence ID" value="AAB00965.1"/>
    <property type="status" value="JOINED"/>
    <property type="molecule type" value="Genomic_DNA"/>
</dbReference>
<dbReference type="EMBL" id="M16412">
    <property type="protein sequence ID" value="AAB00965.1"/>
    <property type="status" value="JOINED"/>
    <property type="molecule type" value="Genomic_DNA"/>
</dbReference>
<dbReference type="EMBL" id="M16413">
    <property type="protein sequence ID" value="AAB00965.1"/>
    <property type="status" value="JOINED"/>
    <property type="molecule type" value="Genomic_DNA"/>
</dbReference>
<dbReference type="EMBL" id="M16414">
    <property type="protein sequence ID" value="AAB00965.1"/>
    <property type="status" value="JOINED"/>
    <property type="molecule type" value="Genomic_DNA"/>
</dbReference>
<dbReference type="EMBL" id="M16415">
    <property type="protein sequence ID" value="AAB00965.1"/>
    <property type="status" value="JOINED"/>
    <property type="molecule type" value="Genomic_DNA"/>
</dbReference>
<dbReference type="EMBL" id="M16416">
    <property type="protein sequence ID" value="AAB00965.1"/>
    <property type="status" value="JOINED"/>
    <property type="molecule type" value="Genomic_DNA"/>
</dbReference>
<dbReference type="EMBL" id="M16417">
    <property type="protein sequence ID" value="AAB00965.1"/>
    <property type="status" value="JOINED"/>
    <property type="molecule type" value="Genomic_DNA"/>
</dbReference>
<dbReference type="EMBL" id="M16418">
    <property type="protein sequence ID" value="AAB00965.1"/>
    <property type="status" value="JOINED"/>
    <property type="molecule type" value="Genomic_DNA"/>
</dbReference>
<dbReference type="EMBL" id="M16419">
    <property type="protein sequence ID" value="AAB00965.1"/>
    <property type="status" value="JOINED"/>
    <property type="molecule type" value="Genomic_DNA"/>
</dbReference>
<dbReference type="EMBL" id="M16420">
    <property type="protein sequence ID" value="AAB00965.1"/>
    <property type="status" value="JOINED"/>
    <property type="molecule type" value="Genomic_DNA"/>
</dbReference>
<dbReference type="EMBL" id="M16421">
    <property type="protein sequence ID" value="AAB00965.1"/>
    <property type="status" value="JOINED"/>
    <property type="molecule type" value="Genomic_DNA"/>
</dbReference>
<dbReference type="EMBL" id="M16422">
    <property type="protein sequence ID" value="AAB00965.1"/>
    <property type="status" value="JOINED"/>
    <property type="molecule type" value="Genomic_DNA"/>
</dbReference>
<dbReference type="EMBL" id="M16423">
    <property type="protein sequence ID" value="AAB00965.1"/>
    <property type="status" value="JOINED"/>
    <property type="molecule type" value="Genomic_DNA"/>
</dbReference>
<dbReference type="EMBL" id="S62076">
    <property type="protein sequence ID" value="AAD13932.1"/>
    <property type="molecule type" value="Genomic_DNA"/>
</dbReference>
<dbReference type="EMBL" id="S62047">
    <property type="protein sequence ID" value="AAD13932.1"/>
    <property type="status" value="JOINED"/>
    <property type="molecule type" value="Genomic_DNA"/>
</dbReference>
<dbReference type="EMBL" id="S62049">
    <property type="protein sequence ID" value="AAD13932.1"/>
    <property type="status" value="JOINED"/>
    <property type="molecule type" value="Genomic_DNA"/>
</dbReference>
<dbReference type="EMBL" id="S62051">
    <property type="protein sequence ID" value="AAD13932.1"/>
    <property type="status" value="JOINED"/>
    <property type="molecule type" value="Genomic_DNA"/>
</dbReference>
<dbReference type="EMBL" id="S62053">
    <property type="protein sequence ID" value="AAD13932.1"/>
    <property type="status" value="JOINED"/>
    <property type="molecule type" value="Genomic_DNA"/>
</dbReference>
<dbReference type="EMBL" id="S62055">
    <property type="protein sequence ID" value="AAD13932.1"/>
    <property type="status" value="JOINED"/>
    <property type="molecule type" value="Genomic_DNA"/>
</dbReference>
<dbReference type="EMBL" id="S62057">
    <property type="protein sequence ID" value="AAD13932.1"/>
    <property type="status" value="JOINED"/>
    <property type="molecule type" value="Genomic_DNA"/>
</dbReference>
<dbReference type="EMBL" id="S62059">
    <property type="protein sequence ID" value="AAD13932.1"/>
    <property type="status" value="JOINED"/>
    <property type="molecule type" value="Genomic_DNA"/>
</dbReference>
<dbReference type="EMBL" id="S62061">
    <property type="protein sequence ID" value="AAD13932.1"/>
    <property type="status" value="JOINED"/>
    <property type="molecule type" value="Genomic_DNA"/>
</dbReference>
<dbReference type="EMBL" id="S62063">
    <property type="protein sequence ID" value="AAD13932.1"/>
    <property type="status" value="JOINED"/>
    <property type="molecule type" value="Genomic_DNA"/>
</dbReference>
<dbReference type="EMBL" id="S62066">
    <property type="protein sequence ID" value="AAD13932.1"/>
    <property type="status" value="JOINED"/>
    <property type="molecule type" value="Genomic_DNA"/>
</dbReference>
<dbReference type="EMBL" id="S62068">
    <property type="protein sequence ID" value="AAD13932.1"/>
    <property type="status" value="JOINED"/>
    <property type="molecule type" value="Genomic_DNA"/>
</dbReference>
<dbReference type="EMBL" id="S62070">
    <property type="protein sequence ID" value="AAD13932.1"/>
    <property type="status" value="JOINED"/>
    <property type="molecule type" value="Genomic_DNA"/>
</dbReference>
<dbReference type="EMBL" id="S62072">
    <property type="protein sequence ID" value="AAD13932.1"/>
    <property type="status" value="JOINED"/>
    <property type="molecule type" value="Genomic_DNA"/>
</dbReference>
<dbReference type="EMBL" id="AK296528">
    <property type="protein sequence ID" value="BAG59159.1"/>
    <property type="molecule type" value="mRNA"/>
</dbReference>
<dbReference type="EMBL" id="AK222502">
    <property type="protein sequence ID" value="BAD96222.1"/>
    <property type="molecule type" value="mRNA"/>
</dbReference>
<dbReference type="EMBL" id="CR627386">
    <property type="protein sequence ID" value="CAH10482.1"/>
    <property type="molecule type" value="mRNA"/>
</dbReference>
<dbReference type="EMBL" id="AC009690">
    <property type="status" value="NOT_ANNOTATED_CDS"/>
    <property type="molecule type" value="Genomic_DNA"/>
</dbReference>
<dbReference type="EMBL" id="BC018927">
    <property type="protein sequence ID" value="AAH18927.1"/>
    <property type="molecule type" value="mRNA"/>
</dbReference>
<dbReference type="EMBL" id="BC084537">
    <property type="protein sequence ID" value="AAH84537.1"/>
    <property type="molecule type" value="mRNA"/>
</dbReference>
<dbReference type="EMBL" id="M13520">
    <property type="protein sequence ID" value="AAA51827.1"/>
    <property type="molecule type" value="mRNA"/>
</dbReference>
<dbReference type="CCDS" id="CCDS10243.1">
    <molecule id="P06865-1"/>
</dbReference>
<dbReference type="PIR" id="A23561">
    <property type="entry name" value="AOHUBA"/>
</dbReference>
<dbReference type="RefSeq" id="NP_000511.2">
    <molecule id="P06865-1"/>
    <property type="nucleotide sequence ID" value="NM_000520.6"/>
</dbReference>
<dbReference type="RefSeq" id="NP_001305754.1">
    <property type="nucleotide sequence ID" value="NM_001318825.1"/>
</dbReference>
<dbReference type="PDB" id="2GJX">
    <property type="method" value="X-ray"/>
    <property type="resolution" value="2.80 A"/>
    <property type="chains" value="A/D/E/H=23-529"/>
</dbReference>
<dbReference type="PDB" id="2GK1">
    <property type="method" value="X-ray"/>
    <property type="resolution" value="3.25 A"/>
    <property type="chains" value="A/C/E/G=23-529"/>
</dbReference>
<dbReference type="PDBsum" id="2GJX"/>
<dbReference type="PDBsum" id="2GK1"/>
<dbReference type="SMR" id="P06865"/>
<dbReference type="BioGRID" id="109322">
    <property type="interactions" value="103"/>
</dbReference>
<dbReference type="ComplexPortal" id="CPX-502">
    <property type="entry name" value="Beta-hexosaminidase A complex"/>
</dbReference>
<dbReference type="ComplexPortal" id="CPX-687">
    <property type="entry name" value="Beta-hexosaminidase S complex"/>
</dbReference>
<dbReference type="CORUM" id="P06865"/>
<dbReference type="FunCoup" id="P06865">
    <property type="interactions" value="1327"/>
</dbReference>
<dbReference type="IntAct" id="P06865">
    <property type="interactions" value="21"/>
</dbReference>
<dbReference type="STRING" id="9606.ENSP00000455114"/>
<dbReference type="BindingDB" id="P06865"/>
<dbReference type="ChEMBL" id="CHEMBL1250415"/>
<dbReference type="DrugCentral" id="P06865"/>
<dbReference type="SwissLipids" id="SLP:000001416">
    <molecule id="P06865-1"/>
</dbReference>
<dbReference type="CAZy" id="GH20">
    <property type="family name" value="Glycoside Hydrolase Family 20"/>
</dbReference>
<dbReference type="GlyConnect" id="1038">
    <property type="glycosylation" value="8 N-Linked glycans (1 site)"/>
</dbReference>
<dbReference type="GlyCosmos" id="P06865">
    <property type="glycosylation" value="3 sites, 7 glycans"/>
</dbReference>
<dbReference type="GlyGen" id="P06865">
    <property type="glycosylation" value="6 sites, 24 N-linked glycans (1 site), 2 O-linked glycans (1 site)"/>
</dbReference>
<dbReference type="iPTMnet" id="P06865"/>
<dbReference type="PhosphoSitePlus" id="P06865"/>
<dbReference type="SwissPalm" id="P06865"/>
<dbReference type="BioMuta" id="HEXA"/>
<dbReference type="DMDM" id="311033393"/>
<dbReference type="jPOST" id="P06865"/>
<dbReference type="MassIVE" id="P06865"/>
<dbReference type="PaxDb" id="9606-ENSP00000268097"/>
<dbReference type="PeptideAtlas" id="P06865"/>
<dbReference type="ProteomicsDB" id="4455"/>
<dbReference type="ProteomicsDB" id="51937">
    <molecule id="P06865-1"/>
</dbReference>
<dbReference type="Pumba" id="P06865"/>
<dbReference type="Antibodypedia" id="26658">
    <property type="antibodies" value="496 antibodies from 32 providers"/>
</dbReference>
<dbReference type="DNASU" id="3073"/>
<dbReference type="Ensembl" id="ENST00000268097.10">
    <molecule id="P06865-1"/>
    <property type="protein sequence ID" value="ENSP00000268097.6"/>
    <property type="gene ID" value="ENSG00000213614.11"/>
</dbReference>
<dbReference type="GeneID" id="3073"/>
<dbReference type="KEGG" id="hsa:3073"/>
<dbReference type="MANE-Select" id="ENST00000268097.10">
    <property type="protein sequence ID" value="ENSP00000268097.6"/>
    <property type="RefSeq nucleotide sequence ID" value="NM_000520.6"/>
    <property type="RefSeq protein sequence ID" value="NP_000511.2"/>
</dbReference>
<dbReference type="UCSC" id="uc002aun.5">
    <molecule id="P06865-1"/>
    <property type="organism name" value="human"/>
</dbReference>
<dbReference type="AGR" id="HGNC:4878"/>
<dbReference type="CTD" id="3073"/>
<dbReference type="DisGeNET" id="3073"/>
<dbReference type="GeneCards" id="HEXA"/>
<dbReference type="GeneReviews" id="HEXA"/>
<dbReference type="HGNC" id="HGNC:4878">
    <property type="gene designation" value="HEXA"/>
</dbReference>
<dbReference type="HPA" id="ENSG00000213614">
    <property type="expression patterns" value="Low tissue specificity"/>
</dbReference>
<dbReference type="MalaCards" id="HEXA"/>
<dbReference type="MIM" id="272800">
    <property type="type" value="phenotype"/>
</dbReference>
<dbReference type="MIM" id="606869">
    <property type="type" value="gene"/>
</dbReference>
<dbReference type="neXtProt" id="NX_P06865"/>
<dbReference type="OpenTargets" id="ENSG00000213614"/>
<dbReference type="Orphanet" id="309192">
    <property type="disease" value="Tay-Sachs disease, adult form"/>
</dbReference>
<dbReference type="Orphanet" id="309178">
    <property type="disease" value="Tay-Sachs disease, infantile form"/>
</dbReference>
<dbReference type="Orphanet" id="309185">
    <property type="disease" value="Tay-Sachs disease, juvenile form"/>
</dbReference>
<dbReference type="PharmGKB" id="PA29256"/>
<dbReference type="VEuPathDB" id="HostDB:ENSG00000213614"/>
<dbReference type="eggNOG" id="KOG2499">
    <property type="taxonomic scope" value="Eukaryota"/>
</dbReference>
<dbReference type="GeneTree" id="ENSGT00390000008107"/>
<dbReference type="InParanoid" id="P06865"/>
<dbReference type="OMA" id="RLWSNEK"/>
<dbReference type="OrthoDB" id="428480at2759"/>
<dbReference type="PAN-GO" id="P06865">
    <property type="GO annotations" value="5 GO annotations based on evolutionary models"/>
</dbReference>
<dbReference type="PhylomeDB" id="P06865"/>
<dbReference type="TreeFam" id="TF313036"/>
<dbReference type="BioCyc" id="MetaCyc:ENSG00000140495-MONOMER"/>
<dbReference type="BRENDA" id="3.2.1.169">
    <property type="organism ID" value="2681"/>
</dbReference>
<dbReference type="PathwayCommons" id="P06865"/>
<dbReference type="Reactome" id="R-HSA-2022857">
    <property type="pathway name" value="Keratan sulfate degradation"/>
</dbReference>
<dbReference type="Reactome" id="R-HSA-2024101">
    <property type="pathway name" value="CS/DS degradation"/>
</dbReference>
<dbReference type="Reactome" id="R-HSA-2160916">
    <property type="pathway name" value="Hyaluronan uptake and degradation"/>
</dbReference>
<dbReference type="Reactome" id="R-HSA-3656234">
    <property type="pathway name" value="Defective HEXA causes GM2G1"/>
</dbReference>
<dbReference type="Reactome" id="R-HSA-9840310">
    <property type="pathway name" value="Glycosphingolipid catabolism"/>
</dbReference>
<dbReference type="SABIO-RK" id="P06865"/>
<dbReference type="SignaLink" id="P06865"/>
<dbReference type="SIGNOR" id="P06865"/>
<dbReference type="BioGRID-ORCS" id="3073">
    <property type="hits" value="11 hits in 1159 CRISPR screens"/>
</dbReference>
<dbReference type="ChiTaRS" id="HEXA">
    <property type="organism name" value="human"/>
</dbReference>
<dbReference type="EvolutionaryTrace" id="P06865"/>
<dbReference type="GeneWiki" id="HEXA"/>
<dbReference type="GenomeRNAi" id="3073"/>
<dbReference type="Pharos" id="P06865">
    <property type="development level" value="Tchem"/>
</dbReference>
<dbReference type="PRO" id="PR:P06865"/>
<dbReference type="Proteomes" id="UP000005640">
    <property type="component" value="Chromosome 15"/>
</dbReference>
<dbReference type="RNAct" id="P06865">
    <property type="molecule type" value="protein"/>
</dbReference>
<dbReference type="Bgee" id="ENSG00000213614">
    <property type="expression patterns" value="Expressed in type B pancreatic cell and 198 other cell types or tissues"/>
</dbReference>
<dbReference type="ExpressionAtlas" id="P06865">
    <property type="expression patterns" value="baseline and differential"/>
</dbReference>
<dbReference type="GO" id="GO:0042582">
    <property type="term" value="C:azurophil granule"/>
    <property type="evidence" value="ECO:0000314"/>
    <property type="project" value="UniProtKB"/>
</dbReference>
<dbReference type="GO" id="GO:1905379">
    <property type="term" value="C:beta-N-acetylhexosaminidase complex"/>
    <property type="evidence" value="ECO:0000314"/>
    <property type="project" value="ComplexPortal"/>
</dbReference>
<dbReference type="GO" id="GO:0005829">
    <property type="term" value="C:cytosol"/>
    <property type="evidence" value="ECO:0000314"/>
    <property type="project" value="HPA"/>
</dbReference>
<dbReference type="GO" id="GO:0070062">
    <property type="term" value="C:extracellular exosome"/>
    <property type="evidence" value="ECO:0007005"/>
    <property type="project" value="UniProtKB"/>
</dbReference>
<dbReference type="GO" id="GO:0043231">
    <property type="term" value="C:intracellular membrane-bounded organelle"/>
    <property type="evidence" value="ECO:0000314"/>
    <property type="project" value="HPA"/>
</dbReference>
<dbReference type="GO" id="GO:0043202">
    <property type="term" value="C:lysosomal lumen"/>
    <property type="evidence" value="ECO:0000304"/>
    <property type="project" value="Reactome"/>
</dbReference>
<dbReference type="GO" id="GO:0005764">
    <property type="term" value="C:lysosome"/>
    <property type="evidence" value="ECO:0000318"/>
    <property type="project" value="GO_Central"/>
</dbReference>
<dbReference type="GO" id="GO:0016020">
    <property type="term" value="C:membrane"/>
    <property type="evidence" value="ECO:0007005"/>
    <property type="project" value="UniProtKB"/>
</dbReference>
<dbReference type="GO" id="GO:0008375">
    <property type="term" value="F:acetylglucosaminyltransferase activity"/>
    <property type="evidence" value="ECO:0000314"/>
    <property type="project" value="UniProtKB"/>
</dbReference>
<dbReference type="GO" id="GO:0004563">
    <property type="term" value="F:beta-N-acetylhexosaminidase activity"/>
    <property type="evidence" value="ECO:0000314"/>
    <property type="project" value="UniProtKB"/>
</dbReference>
<dbReference type="GO" id="GO:0046982">
    <property type="term" value="F:protein heterodimerization activity"/>
    <property type="evidence" value="ECO:0000314"/>
    <property type="project" value="MGI"/>
</dbReference>
<dbReference type="GO" id="GO:0007628">
    <property type="term" value="P:adult walking behavior"/>
    <property type="evidence" value="ECO:0007669"/>
    <property type="project" value="Ensembl"/>
</dbReference>
<dbReference type="GO" id="GO:0005975">
    <property type="term" value="P:carbohydrate metabolic process"/>
    <property type="evidence" value="ECO:0007669"/>
    <property type="project" value="InterPro"/>
</dbReference>
<dbReference type="GO" id="GO:0048667">
    <property type="term" value="P:cell morphogenesis involved in neuron differentiation"/>
    <property type="evidence" value="ECO:0007669"/>
    <property type="project" value="Ensembl"/>
</dbReference>
<dbReference type="GO" id="GO:0030209">
    <property type="term" value="P:dermatan sulfate proteoglycan catabolic process"/>
    <property type="evidence" value="ECO:0007669"/>
    <property type="project" value="Ensembl"/>
</dbReference>
<dbReference type="GO" id="GO:0006689">
    <property type="term" value="P:ganglioside catabolic process"/>
    <property type="evidence" value="ECO:0000314"/>
    <property type="project" value="UniProtKB"/>
</dbReference>
<dbReference type="GO" id="GO:0006024">
    <property type="term" value="P:glycosaminoglycan biosynthetic process"/>
    <property type="evidence" value="ECO:0000314"/>
    <property type="project" value="UniProtKB"/>
</dbReference>
<dbReference type="GO" id="GO:0030203">
    <property type="term" value="P:glycosaminoglycan metabolic process"/>
    <property type="evidence" value="ECO:0000314"/>
    <property type="project" value="ComplexPortal"/>
</dbReference>
<dbReference type="GO" id="GO:0030214">
    <property type="term" value="P:hyaluronan catabolic process"/>
    <property type="evidence" value="ECO:0007669"/>
    <property type="project" value="Ensembl"/>
</dbReference>
<dbReference type="GO" id="GO:0019915">
    <property type="term" value="P:lipid storage"/>
    <property type="evidence" value="ECO:0007669"/>
    <property type="project" value="Ensembl"/>
</dbReference>
<dbReference type="GO" id="GO:0007040">
    <property type="term" value="P:lysosome organization"/>
    <property type="evidence" value="ECO:0007669"/>
    <property type="project" value="Ensembl"/>
</dbReference>
<dbReference type="GO" id="GO:0042552">
    <property type="term" value="P:myelination"/>
    <property type="evidence" value="ECO:0007669"/>
    <property type="project" value="Ensembl"/>
</dbReference>
<dbReference type="GO" id="GO:0006491">
    <property type="term" value="P:N-glycan processing"/>
    <property type="evidence" value="ECO:0000318"/>
    <property type="project" value="GO_Central"/>
</dbReference>
<dbReference type="GO" id="GO:0050885">
    <property type="term" value="P:neuromuscular process controlling balance"/>
    <property type="evidence" value="ECO:0007669"/>
    <property type="project" value="Ensembl"/>
</dbReference>
<dbReference type="GO" id="GO:0050884">
    <property type="term" value="P:neuromuscular process controlling posture"/>
    <property type="evidence" value="ECO:0007669"/>
    <property type="project" value="Ensembl"/>
</dbReference>
<dbReference type="GO" id="GO:0007605">
    <property type="term" value="P:sensory perception of sound"/>
    <property type="evidence" value="ECO:0007669"/>
    <property type="project" value="Ensembl"/>
</dbReference>
<dbReference type="GO" id="GO:0019953">
    <property type="term" value="P:sexual reproduction"/>
    <property type="evidence" value="ECO:0007669"/>
    <property type="project" value="Ensembl"/>
</dbReference>
<dbReference type="GO" id="GO:0001501">
    <property type="term" value="P:skeletal system development"/>
    <property type="evidence" value="ECO:0007669"/>
    <property type="project" value="Ensembl"/>
</dbReference>
<dbReference type="CDD" id="cd06562">
    <property type="entry name" value="GH20_HexA_HexB-like"/>
    <property type="match status" value="1"/>
</dbReference>
<dbReference type="FunFam" id="3.20.20.80:FF:000049">
    <property type="entry name" value="Beta-hexosaminidase A"/>
    <property type="match status" value="1"/>
</dbReference>
<dbReference type="FunFam" id="3.30.379.10:FF:000001">
    <property type="entry name" value="Beta-hexosaminidase subunit beta"/>
    <property type="match status" value="1"/>
</dbReference>
<dbReference type="Gene3D" id="3.30.379.10">
    <property type="entry name" value="Chitobiase/beta-hexosaminidase domain 2-like"/>
    <property type="match status" value="1"/>
</dbReference>
<dbReference type="Gene3D" id="3.20.20.80">
    <property type="entry name" value="Glycosidases"/>
    <property type="match status" value="1"/>
</dbReference>
<dbReference type="InterPro" id="IPR025705">
    <property type="entry name" value="Beta_hexosaminidase_sua/sub"/>
</dbReference>
<dbReference type="InterPro" id="IPR015883">
    <property type="entry name" value="Glyco_hydro_20_cat"/>
</dbReference>
<dbReference type="InterPro" id="IPR017853">
    <property type="entry name" value="Glycoside_hydrolase_SF"/>
</dbReference>
<dbReference type="InterPro" id="IPR029018">
    <property type="entry name" value="Hex-like_dom2"/>
</dbReference>
<dbReference type="InterPro" id="IPR029019">
    <property type="entry name" value="HEX_eukaryotic_N"/>
</dbReference>
<dbReference type="PANTHER" id="PTHR22600">
    <property type="entry name" value="BETA-HEXOSAMINIDASE"/>
    <property type="match status" value="1"/>
</dbReference>
<dbReference type="PANTHER" id="PTHR22600:SF39">
    <property type="entry name" value="BETA-HEXOSAMINIDASE SUBUNIT ALPHA"/>
    <property type="match status" value="1"/>
</dbReference>
<dbReference type="Pfam" id="PF00728">
    <property type="entry name" value="Glyco_hydro_20"/>
    <property type="match status" value="1"/>
</dbReference>
<dbReference type="Pfam" id="PF14845">
    <property type="entry name" value="Glycohydro_20b2"/>
    <property type="match status" value="1"/>
</dbReference>
<dbReference type="PIRSF" id="PIRSF001093">
    <property type="entry name" value="B-hxosamndse_ab_euk"/>
    <property type="match status" value="1"/>
</dbReference>
<dbReference type="PRINTS" id="PR00738">
    <property type="entry name" value="GLHYDRLASE20"/>
</dbReference>
<dbReference type="SUPFAM" id="SSF51445">
    <property type="entry name" value="(Trans)glycosidases"/>
    <property type="match status" value="1"/>
</dbReference>
<dbReference type="SUPFAM" id="SSF55545">
    <property type="entry name" value="beta-N-acetylhexosaminidase-like domain"/>
    <property type="match status" value="1"/>
</dbReference>
<sequence length="529" mass="60703">MTSSRLWFSLLLAAAFAGRATALWPWPQNFQTSDQRYVLYPNNFQFQYDVSSAAQPGCSVLDEAFQRYRDLLFGSGSWPRPYLTGKRHTLEKNVLVVSVVTPGCNQLPTLESVENYTLTINDDQCLLLSETVWGALRGLETFSQLVWKSAEGTFFINKTEIEDFPRFPHRGLLLDTSRHYLPLSSILDTLDVMAYNKLNVFHWHLVDDPSFPYESFTFPELMRKGSYNPVTHIYTAQDVKEVIEYARLRGIRVLAEFDTPGHTLSWGPGIPGLLTPCYSGSEPSGTFGPVNPSLNNTYEFMSTFFLEVSSVFPDFYLHLGGDEVDFTCWKSNPEIQDFMRKKGFGEDFKQLESFYIQTLLDIVSSYGKGYVVWQEVFDNKVKIQPDTIIQVWREDIPVNYMKELELVTKAGFRALLSAPWYLNRISYGPDWKDFYIVEPLAFEGTPEQKALVIGGEACMWGEYVDNTNLVPRLWPRAGAVAERLWSNKLTSDLTFAYERLSHFRCELLRRGVQAQPLNVGFCEQEFEQT</sequence>
<reference key="1">
    <citation type="journal article" date="1985" name="Proc. Natl. Acad. Sci. U.S.A.">
        <title>Human beta-hexosaminidase alpha chain: coding sequence and homology with the beta chain.</title>
        <authorList>
            <person name="Myerowitz R."/>
            <person name="Piekarz R."/>
            <person name="Neufeld E.F."/>
            <person name="Shows T.B."/>
            <person name="Suzuki K."/>
        </authorList>
    </citation>
    <scope>NUCLEOTIDE SEQUENCE [MRNA] (ISOFORM 1)</scope>
    <scope>VARIANT VAL-436</scope>
</reference>
<reference key="2">
    <citation type="journal article" date="1987" name="J. Biol. Chem.">
        <title>Organization of the gene encoding the human beta-hexosaminidase alpha-chain.</title>
        <authorList>
            <person name="Proia R.L."/>
            <person name="Soravia E."/>
        </authorList>
    </citation>
    <scope>NUCLEOTIDE SEQUENCE [GENOMIC DNA]</scope>
    <scope>VARIANT VAL-436</scope>
</reference>
<reference key="3">
    <citation type="journal article" date="1991" name="Am. J. Hum. Genet.">
        <title>Sequence of DNA flanking the exons of the HEXA gene, and identification of mutations in Tay-Sachs disease.</title>
        <authorList>
            <person name="Triggs-Raine B.L."/>
            <person name="Akerman B.R."/>
            <person name="Clarke J.T.R."/>
            <person name="Gravel R.A."/>
        </authorList>
    </citation>
    <scope>NUCLEOTIDE SEQUENCE [GENOMIC DNA]</scope>
    <scope>VARIANT VAL-436</scope>
</reference>
<reference key="4">
    <citation type="journal article" date="2004" name="Nat. Genet.">
        <title>Complete sequencing and characterization of 21,243 full-length human cDNAs.</title>
        <authorList>
            <person name="Ota T."/>
            <person name="Suzuki Y."/>
            <person name="Nishikawa T."/>
            <person name="Otsuki T."/>
            <person name="Sugiyama T."/>
            <person name="Irie R."/>
            <person name="Wakamatsu A."/>
            <person name="Hayashi K."/>
            <person name="Sato H."/>
            <person name="Nagai K."/>
            <person name="Kimura K."/>
            <person name="Makita H."/>
            <person name="Sekine M."/>
            <person name="Obayashi M."/>
            <person name="Nishi T."/>
            <person name="Shibahara T."/>
            <person name="Tanaka T."/>
            <person name="Ishii S."/>
            <person name="Yamamoto J."/>
            <person name="Saito K."/>
            <person name="Kawai Y."/>
            <person name="Isono Y."/>
            <person name="Nakamura Y."/>
            <person name="Nagahari K."/>
            <person name="Murakami K."/>
            <person name="Yasuda T."/>
            <person name="Iwayanagi T."/>
            <person name="Wagatsuma M."/>
            <person name="Shiratori A."/>
            <person name="Sudo H."/>
            <person name="Hosoiri T."/>
            <person name="Kaku Y."/>
            <person name="Kodaira H."/>
            <person name="Kondo H."/>
            <person name="Sugawara M."/>
            <person name="Takahashi M."/>
            <person name="Kanda K."/>
            <person name="Yokoi T."/>
            <person name="Furuya T."/>
            <person name="Kikkawa E."/>
            <person name="Omura Y."/>
            <person name="Abe K."/>
            <person name="Kamihara K."/>
            <person name="Katsuta N."/>
            <person name="Sato K."/>
            <person name="Tanikawa M."/>
            <person name="Yamazaki M."/>
            <person name="Ninomiya K."/>
            <person name="Ishibashi T."/>
            <person name="Yamashita H."/>
            <person name="Murakawa K."/>
            <person name="Fujimori K."/>
            <person name="Tanai H."/>
            <person name="Kimata M."/>
            <person name="Watanabe M."/>
            <person name="Hiraoka S."/>
            <person name="Chiba Y."/>
            <person name="Ishida S."/>
            <person name="Ono Y."/>
            <person name="Takiguchi S."/>
            <person name="Watanabe S."/>
            <person name="Yosida M."/>
            <person name="Hotuta T."/>
            <person name="Kusano J."/>
            <person name="Kanehori K."/>
            <person name="Takahashi-Fujii A."/>
            <person name="Hara H."/>
            <person name="Tanase T.-O."/>
            <person name="Nomura Y."/>
            <person name="Togiya S."/>
            <person name="Komai F."/>
            <person name="Hara R."/>
            <person name="Takeuchi K."/>
            <person name="Arita M."/>
            <person name="Imose N."/>
            <person name="Musashino K."/>
            <person name="Yuuki H."/>
            <person name="Oshima A."/>
            <person name="Sasaki N."/>
            <person name="Aotsuka S."/>
            <person name="Yoshikawa Y."/>
            <person name="Matsunawa H."/>
            <person name="Ichihara T."/>
            <person name="Shiohata N."/>
            <person name="Sano S."/>
            <person name="Moriya S."/>
            <person name="Momiyama H."/>
            <person name="Satoh N."/>
            <person name="Takami S."/>
            <person name="Terashima Y."/>
            <person name="Suzuki O."/>
            <person name="Nakagawa S."/>
            <person name="Senoh A."/>
            <person name="Mizoguchi H."/>
            <person name="Goto Y."/>
            <person name="Shimizu F."/>
            <person name="Wakebe H."/>
            <person name="Hishigaki H."/>
            <person name="Watanabe T."/>
            <person name="Sugiyama A."/>
            <person name="Takemoto M."/>
            <person name="Kawakami B."/>
            <person name="Yamazaki M."/>
            <person name="Watanabe K."/>
            <person name="Kumagai A."/>
            <person name="Itakura S."/>
            <person name="Fukuzumi Y."/>
            <person name="Fujimori Y."/>
            <person name="Komiyama M."/>
            <person name="Tashiro H."/>
            <person name="Tanigami A."/>
            <person name="Fujiwara T."/>
            <person name="Ono T."/>
            <person name="Yamada K."/>
            <person name="Fujii Y."/>
            <person name="Ozaki K."/>
            <person name="Hirao M."/>
            <person name="Ohmori Y."/>
            <person name="Kawabata A."/>
            <person name="Hikiji T."/>
            <person name="Kobatake N."/>
            <person name="Inagaki H."/>
            <person name="Ikema Y."/>
            <person name="Okamoto S."/>
            <person name="Okitani R."/>
            <person name="Kawakami T."/>
            <person name="Noguchi S."/>
            <person name="Itoh T."/>
            <person name="Shigeta K."/>
            <person name="Senba T."/>
            <person name="Matsumura K."/>
            <person name="Nakajima Y."/>
            <person name="Mizuno T."/>
            <person name="Morinaga M."/>
            <person name="Sasaki M."/>
            <person name="Togashi T."/>
            <person name="Oyama M."/>
            <person name="Hata H."/>
            <person name="Watanabe M."/>
            <person name="Komatsu T."/>
            <person name="Mizushima-Sugano J."/>
            <person name="Satoh T."/>
            <person name="Shirai Y."/>
            <person name="Takahashi Y."/>
            <person name="Nakagawa K."/>
            <person name="Okumura K."/>
            <person name="Nagase T."/>
            <person name="Nomura N."/>
            <person name="Kikuchi H."/>
            <person name="Masuho Y."/>
            <person name="Yamashita R."/>
            <person name="Nakai K."/>
            <person name="Yada T."/>
            <person name="Nakamura Y."/>
            <person name="Ohara O."/>
            <person name="Isogai T."/>
            <person name="Sugano S."/>
        </authorList>
    </citation>
    <scope>NUCLEOTIDE SEQUENCE [LARGE SCALE MRNA] (ISOFORM 2)</scope>
    <source>
        <tissue>Thalamus</tissue>
    </source>
</reference>
<reference key="5">
    <citation type="submission" date="2005-04" db="EMBL/GenBank/DDBJ databases">
        <authorList>
            <person name="Suzuki Y."/>
            <person name="Sugano S."/>
            <person name="Totoki Y."/>
            <person name="Toyoda A."/>
            <person name="Takeda T."/>
            <person name="Sakaki Y."/>
            <person name="Tanaka A."/>
            <person name="Yokoyama S."/>
        </authorList>
    </citation>
    <scope>NUCLEOTIDE SEQUENCE [LARGE SCALE MRNA] (ISOFORM 1)</scope>
    <scope>VARIANT VAL-436</scope>
    <source>
        <tissue>Adipose tissue</tissue>
    </source>
</reference>
<reference key="6">
    <citation type="journal article" date="2007" name="BMC Genomics">
        <title>The full-ORF clone resource of the German cDNA consortium.</title>
        <authorList>
            <person name="Bechtel S."/>
            <person name="Rosenfelder H."/>
            <person name="Duda A."/>
            <person name="Schmidt C.P."/>
            <person name="Ernst U."/>
            <person name="Wellenreuther R."/>
            <person name="Mehrle A."/>
            <person name="Schuster C."/>
            <person name="Bahr A."/>
            <person name="Bloecker H."/>
            <person name="Heubner D."/>
            <person name="Hoerlein A."/>
            <person name="Michel G."/>
            <person name="Wedler H."/>
            <person name="Koehrer K."/>
            <person name="Ottenwaelder B."/>
            <person name="Poustka A."/>
            <person name="Wiemann S."/>
            <person name="Schupp I."/>
        </authorList>
    </citation>
    <scope>NUCLEOTIDE SEQUENCE [LARGE SCALE MRNA] (ISOFORM 1)</scope>
    <scope>VARIANTS PSEUDODEFICIENCY TRP-249 AND VAL-436</scope>
</reference>
<reference key="7">
    <citation type="journal article" date="2006" name="Nature">
        <title>Analysis of the DNA sequence and duplication history of human chromosome 15.</title>
        <authorList>
            <person name="Zody M.C."/>
            <person name="Garber M."/>
            <person name="Sharpe T."/>
            <person name="Young S.K."/>
            <person name="Rowen L."/>
            <person name="O'Neill K."/>
            <person name="Whittaker C.A."/>
            <person name="Kamal M."/>
            <person name="Chang J.L."/>
            <person name="Cuomo C.A."/>
            <person name="Dewar K."/>
            <person name="FitzGerald M.G."/>
            <person name="Kodira C.D."/>
            <person name="Madan A."/>
            <person name="Qin S."/>
            <person name="Yang X."/>
            <person name="Abbasi N."/>
            <person name="Abouelleil A."/>
            <person name="Arachchi H.M."/>
            <person name="Baradarani L."/>
            <person name="Birditt B."/>
            <person name="Bloom S."/>
            <person name="Bloom T."/>
            <person name="Borowsky M.L."/>
            <person name="Burke J."/>
            <person name="Butler J."/>
            <person name="Cook A."/>
            <person name="DeArellano K."/>
            <person name="DeCaprio D."/>
            <person name="Dorris L. III"/>
            <person name="Dors M."/>
            <person name="Eichler E.E."/>
            <person name="Engels R."/>
            <person name="Fahey J."/>
            <person name="Fleetwood P."/>
            <person name="Friedman C."/>
            <person name="Gearin G."/>
            <person name="Hall J.L."/>
            <person name="Hensley G."/>
            <person name="Johnson E."/>
            <person name="Jones C."/>
            <person name="Kamat A."/>
            <person name="Kaur A."/>
            <person name="Locke D.P."/>
            <person name="Madan A."/>
            <person name="Munson G."/>
            <person name="Jaffe D.B."/>
            <person name="Lui A."/>
            <person name="Macdonald P."/>
            <person name="Mauceli E."/>
            <person name="Naylor J.W."/>
            <person name="Nesbitt R."/>
            <person name="Nicol R."/>
            <person name="O'Leary S.B."/>
            <person name="Ratcliffe A."/>
            <person name="Rounsley S."/>
            <person name="She X."/>
            <person name="Sneddon K.M.B."/>
            <person name="Stewart S."/>
            <person name="Sougnez C."/>
            <person name="Stone S.M."/>
            <person name="Topham K."/>
            <person name="Vincent D."/>
            <person name="Wang S."/>
            <person name="Zimmer A.R."/>
            <person name="Birren B.W."/>
            <person name="Hood L."/>
            <person name="Lander E.S."/>
            <person name="Nusbaum C."/>
        </authorList>
    </citation>
    <scope>NUCLEOTIDE SEQUENCE [LARGE SCALE GENOMIC DNA]</scope>
</reference>
<reference key="8">
    <citation type="journal article" date="2004" name="Genome Res.">
        <title>The status, quality, and expansion of the NIH full-length cDNA project: the Mammalian Gene Collection (MGC).</title>
        <authorList>
            <consortium name="The MGC Project Team"/>
        </authorList>
    </citation>
    <scope>NUCLEOTIDE SEQUENCE [LARGE SCALE MRNA] (ISOFORM 1)</scope>
    <scope>VARIANT VAL-436</scope>
    <source>
        <tissue>Brain</tissue>
        <tissue>Eye</tissue>
    </source>
</reference>
<reference key="9">
    <citation type="journal article" date="2002" name="J. Biol. Chem.">
        <title>Physiological substrates for human lysosomal beta -hexosaminidase S.</title>
        <authorList>
            <person name="Hepbildikler S.T."/>
            <person name="Sandhoff R."/>
            <person name="Kolzer M."/>
            <person name="Proia R.L."/>
            <person name="Sandhoff K."/>
        </authorList>
    </citation>
    <scope>PROTEIN SEQUENCE OF 23-32 AND 85-94</scope>
    <scope>FUNCTION</scope>
    <scope>CATALYTIC ACTIVITY</scope>
    <scope>GLYCOSYLATION AT ASN-115; ASN-157 AND ASN-295</scope>
    <scope>DISULFIDE BOND</scope>
    <scope>ACTIVITY REGULATION</scope>
</reference>
<reference key="10">
    <citation type="journal article" date="1986" name="J. Biol. Chem.">
        <title>Isolation of cDNA clones coding for the alpha-subunit of human beta-hexosaminidase. Extensive homology between the alpha- and beta-subunits and studies on Tay-Sachs disease.</title>
        <authorList>
            <person name="Korneluk R.G."/>
            <person name="Mahuran D.J."/>
            <person name="Neote K."/>
            <person name="Klavins M.H."/>
            <person name="O'Dowd B.F."/>
            <person name="Tropak M."/>
            <person name="Willard H.F."/>
            <person name="Anderson M.-J."/>
            <person name="Lowden J.A."/>
            <person name="Gravel R.A."/>
        </authorList>
    </citation>
    <scope>NUCLEOTIDE SEQUENCE [MRNA] OF 40-529 (ISOFORM 1)</scope>
    <scope>VARIANT VAL-436</scope>
</reference>
<reference key="11">
    <citation type="journal article" date="1988" name="J. Biol. Chem.">
        <title>Proteolytic processing of pro-alpha and pro-beta precursors from human beta-hexosaminidase. Generation of the mature alpha and beta a beta b subunits.</title>
        <authorList>
            <person name="Mahuran D.J."/>
            <person name="Neote K."/>
            <person name="Klavins M.H."/>
            <person name="Leung A."/>
            <person name="Gravel R.A."/>
        </authorList>
    </citation>
    <scope>PROTEIN SEQUENCE OF 89-99</scope>
</reference>
<reference key="12">
    <citation type="journal article" date="1988" name="Biochemistry">
        <title>Oligosaccharide structure and amino acid sequence of the major glycopeptides of mature human beta-hexosaminidase.</title>
        <authorList>
            <person name="O'Dowd B.F."/>
            <person name="Cumming D.A."/>
            <person name="Gravel R.A."/>
            <person name="Mahuran D.J."/>
        </authorList>
    </citation>
    <scope>PROTEIN SEQUENCE OF 96-105</scope>
    <scope>STRUCTURE OF CARBOHYDRATES</scope>
</reference>
<reference key="13">
    <citation type="journal article" date="1992" name="J. Biol. Chem.">
        <title>Analysis of the glycosylation and phosphorylation of the alpha-subunit of the lysosomal enzyme, beta-hexosaminidase A, by site-directed mutagenesis.</title>
        <authorList>
            <person name="Weitz G."/>
            <person name="Proia R.L."/>
        </authorList>
    </citation>
    <scope>GLYCOSYLATION AT ASN-115; ASN-157 AND ASN-295</scope>
    <scope>MUTAGENESIS OF ASN-115; ASN-157 AND ASN-295</scope>
</reference>
<reference key="14">
    <citation type="journal article" date="1994" name="Biochim. Biophys. Acta">
        <title>Classification of disorders of GM2 ganglioside hydrolysis using 3H-GM2 as substrate.</title>
        <authorList>
            <person name="Novak A."/>
            <person name="Callahan J.W."/>
            <person name="Lowden J.A."/>
        </authorList>
    </citation>
    <scope>CATALYTIC ACTIVITY</scope>
    <scope>FUNCTION</scope>
</reference>
<reference key="15">
    <citation type="journal article" date="1996" name="Biochemistry">
        <title>Direct determination of the substrate specificity of the alpha-active site in heterodimeric beta-hexosaminidase A.</title>
        <authorList>
            <person name="Hou Y."/>
            <person name="Tse R."/>
            <person name="Mahuran D.J."/>
        </authorList>
    </citation>
    <scope>CATALYTIC ACTIVITY</scope>
    <scope>FUNCTION</scope>
    <scope>SUBUNIT</scope>
</reference>
<reference key="16">
    <citation type="journal article" date="1996" name="Biochemistry">
        <title>Identification of an active acidic residue in the catalytic site of beta-hexosaminidase.</title>
        <authorList>
            <person name="Tse R."/>
            <person name="Vavougios G."/>
            <person name="Hou Y."/>
            <person name="Mahuran D.J."/>
        </authorList>
    </citation>
    <scope>ACTIVE SITES</scope>
</reference>
<reference key="17">
    <citation type="journal article" date="1998" name="J. Biol. Chem.">
        <title>A Pro504 --&gt; Ser substitution in the beta-subunit of beta-hexosaminidase A inhibits alpha-subunit hydrolysis of GM2 ganglioside, resulting in chronic Sandhoff disease.</title>
        <authorList>
            <person name="Hou Y."/>
            <person name="McInnes B."/>
            <person name="Hinek A."/>
            <person name="Karpati G."/>
            <person name="Mahuran D."/>
        </authorList>
    </citation>
    <scope>CATALYTIC ACTIVITY</scope>
    <scope>FUNCTION</scope>
</reference>
<reference key="18">
    <citation type="journal article" date="2009" name="J. Proteome Res.">
        <title>Glycoproteomics analysis of human liver tissue by combination of multiple enzyme digestion and hydrazide chemistry.</title>
        <authorList>
            <person name="Chen R."/>
            <person name="Jiang X."/>
            <person name="Sun D."/>
            <person name="Han G."/>
            <person name="Wang F."/>
            <person name="Ye M."/>
            <person name="Wang L."/>
            <person name="Zou H."/>
        </authorList>
    </citation>
    <scope>GLYCOSYLATION [LARGE SCALE ANALYSIS] AT ASN-157 AND ASN-295</scope>
    <source>
        <tissue>Liver</tissue>
    </source>
</reference>
<reference key="19">
    <citation type="journal article" date="2014" name="J. Proteomics">
        <title>An enzyme assisted RP-RPLC approach for in-depth analysis of human liver phosphoproteome.</title>
        <authorList>
            <person name="Bian Y."/>
            <person name="Song C."/>
            <person name="Cheng K."/>
            <person name="Dong M."/>
            <person name="Wang F."/>
            <person name="Huang J."/>
            <person name="Sun D."/>
            <person name="Wang L."/>
            <person name="Ye M."/>
            <person name="Zou H."/>
        </authorList>
    </citation>
    <scope>IDENTIFICATION BY MASS SPECTROMETRY [LARGE SCALE ANALYSIS]</scope>
    <source>
        <tissue>Liver</tissue>
    </source>
</reference>
<reference key="20">
    <citation type="journal article" date="2015" name="Proteomics">
        <title>N-terminome analysis of the human mitochondrial proteome.</title>
        <authorList>
            <person name="Vaca Jacome A.S."/>
            <person name="Rabilloud T."/>
            <person name="Schaeffer-Reiss C."/>
            <person name="Rompais M."/>
            <person name="Ayoub D."/>
            <person name="Lane L."/>
            <person name="Bairoch A."/>
            <person name="Van Dorsselaer A."/>
            <person name="Carapito C."/>
        </authorList>
    </citation>
    <scope>IDENTIFICATION BY MASS SPECTROMETRY [LARGE SCALE ANALYSIS]</scope>
</reference>
<reference key="21">
    <citation type="journal article" date="1996" name="Nat. Struct. Biol.">
        <title>Bacterial chitobiase structure provides insight into catalytic mechanism and the basis of Tay-Sachs disease.</title>
        <authorList>
            <person name="Tews I."/>
            <person name="Perrakis A."/>
            <person name="Oppenheim A."/>
            <person name="Dauter Z."/>
            <person name="Wilson K.S."/>
            <person name="Vorgias C.E."/>
        </authorList>
    </citation>
    <scope>3D-STRUCTURE MODELING</scope>
</reference>
<reference key="22">
    <citation type="journal article" date="1991" name="Biochim. Biophys. Acta">
        <title>The biochemistry of HEXA and HEXB gene mutations causing GM2 gangliosidosis.</title>
        <authorList>
            <person name="Mahuran D.J."/>
        </authorList>
    </citation>
    <scope>REVIEW ON VARIANTS</scope>
</reference>
<reference key="23">
    <citation type="journal article" date="1997" name="Hum. Mutat.">
        <title>Tay-Sachs disease-causing mutations and neutral polymorphisms in the Hex A gene.</title>
        <authorList>
            <person name="Myerowitz R."/>
        </authorList>
    </citation>
    <scope>REVIEW ON VARIANTS</scope>
</reference>
<reference key="24">
    <citation type="journal article" date="2006" name="J. Mol. Biol.">
        <title>Crystallographic structure of human beta-hexosaminidase A: interpretation of Tay-Sachs mutations and loss of GM2 ganglioside hydrolysis.</title>
        <authorList>
            <person name="Lemieux M.J."/>
            <person name="Mark B.L."/>
            <person name="Cherney M.M."/>
            <person name="Withers S.G."/>
            <person name="Mahuran D.J."/>
            <person name="James M.N."/>
        </authorList>
    </citation>
    <scope>X-RAY CRYSTALLOGRAPHY (2.8 ANGSTROMS) OF 23-529 IN COMPLEX WITH HEXB</scope>
    <scope>GLYCOSYLATION AT ASN-115; ASN-157 AND ASN-295</scope>
    <scope>DISULFIDE BONDS</scope>
    <scope>SUBUNIT</scope>
    <scope>ACTIVE SITE</scope>
</reference>
<reference key="25">
    <citation type="journal article" date="1988" name="J. Neurochem.">
        <title>A point mutation in the coding sequence of the beta-hexosaminidase alpha gene results in defective processing of the enzyme protein in an unusual GM2-gangliosidosis variant.</title>
        <authorList>
            <person name="Nakano T."/>
            <person name="Muscillo M."/>
            <person name="Ohno K."/>
            <person name="Hoffman A.J."/>
            <person name="Suzuki K."/>
        </authorList>
    </citation>
    <scope>VARIANT GM2G1 LYS-482</scope>
</reference>
<reference key="26">
    <citation type="journal article" date="1989" name="Science">
        <title>The mutations in Ashkenazi Jews with adult GM2 gangliosidosis, the adult form of Tay-Sachs disease.</title>
        <authorList>
            <person name="Navon R."/>
            <person name="Proia R.L."/>
        </authorList>
    </citation>
    <scope>VARIANT GM2G1 SER-269</scope>
</reference>
<reference key="27">
    <citation type="journal article" date="1990" name="Am. J. Hum. Genet.">
        <title>A new point mutation in the beta-hexosaminidase alpha subunit gene responsible for infantile Tay-Sachs disease in a non-Jewish Caucasian patient (a Kpn mutant).</title>
        <authorList>
            <person name="Tanaka A."/>
            <person name="Punnett H.H."/>
            <person name="Suzuki K."/>
        </authorList>
    </citation>
    <scope>VARIANT GM2G1 CYS-420</scope>
</reference>
<reference key="28">
    <citation type="journal article" date="1990" name="J. Biol. Chem.">
        <title>Juvenile GM2 gangliosidosis caused by substitution of histidine for arginine at position 499 or 504 of the alpha-subunit of beta-hexosaminidase.</title>
        <authorList>
            <person name="Paw B.H."/>
            <person name="Moskowitz S.M."/>
            <person name="Uhrhammer N."/>
            <person name="Wright N."/>
            <person name="Kaback M.M."/>
            <person name="Neufeld E.F."/>
        </authorList>
    </citation>
    <scope>VARIANT GM2G1 HIS-504</scope>
    <scope>CHARACTERIZATION OF VARIANT GM2G1 HIS-504</scope>
</reference>
<reference key="29">
    <citation type="journal article" date="1991" name="Genomics">
        <title>Seven novel Tay-Sachs mutations detected by chemical mismatch cleavage of PCR-amplified cDNA fragments.</title>
        <authorList>
            <person name="Akli S."/>
            <person name="Lacorte J.-M."/>
            <person name="Poenaru L."/>
            <person name="Khan A."/>
        </authorList>
    </citation>
    <scope>VARIANTS GM2G1 PHE-210 AND CYS-504</scope>
</reference>
<reference key="30">
    <citation type="journal article" date="1992" name="Am. J. Hum. Genet.">
        <title>Six novel deleterious and three neutral mutations in the gene encoding the alpha-subunit of hexosaminidase A in non-Jewish individuals.</title>
        <authorList>
            <person name="Mules E.H."/>
            <person name="Hayflick S."/>
            <person name="Miller C.S."/>
            <person name="Reynolds L.W."/>
            <person name="Thomas G.H."/>
        </authorList>
    </citation>
    <scope>VARIANT GM2G1 GLY-320 DEL</scope>
    <scope>VARIANTS ASP-399 AND VAL-436</scope>
</reference>
<reference key="31">
    <citation type="journal article" date="1992" name="Am. J. Hum. Genet.">
        <title>A pseudodeficiency allele common in non-Jewish Tay-Sachs carriers: implications for carrier screening.</title>
        <authorList>
            <person name="Triggs-Raine B.L."/>
            <person name="Mules E.H."/>
            <person name="Kaback M.M."/>
            <person name="Lim-Steele J.S.T."/>
            <person name="Dowling C.E."/>
            <person name="Akerman B.R."/>
            <person name="Natowicz M.R."/>
            <person name="Grebner E.E."/>
            <person name="Navon R."/>
            <person name="Welch J.P."/>
            <person name="Greenberg C.R."/>
            <person name="Thomas G.H."/>
            <person name="Gravel R.A."/>
        </authorList>
    </citation>
    <scope>VARIANT PSEUDODEFICIENCY TRP-247</scope>
</reference>
<reference key="32">
    <citation type="journal article" date="1992" name="Hum. Mol. Genet.">
        <title>A new Tay-Sachs disease B1 allele in exon 7 in two compound heterozygotes each with a second novel mutation.</title>
        <authorList>
            <person name="Fernandes M."/>
            <person name="Kaplan F."/>
            <person name="Natowicz M."/>
            <person name="Prence E."/>
            <person name="Kolodny E."/>
            <person name="Kaback M."/>
            <person name="Hechtman P."/>
        </authorList>
    </citation>
    <scope>VARIANTS GM2G1 TRP-170 AND HIS-258</scope>
</reference>
<reference key="33">
    <citation type="journal article" date="1992" name="Hum. Mutat.">
        <title>A glycine250--&gt; aspartate substitution in the alpha-subunit of hexosaminidase A causes juvenile-onset Tay-Sachs disease in a Lebanese-Canadian family.</title>
        <authorList>
            <person name="Trop I."/>
            <person name="Kaplan F."/>
            <person name="Brown C."/>
            <person name="Mahuran D."/>
            <person name="Hechtman P."/>
        </authorList>
    </citation>
    <scope>VARIANT GM2G1 ASP-250</scope>
</reference>
<reference key="34">
    <citation type="journal article" date="1992" name="Hum. Mutat.">
        <title>Novel Tay-Sachs disease mutations from China.</title>
        <authorList>
            <person name="Akalin N."/>
            <person name="Shi H.-P."/>
            <person name="Vavougios G."/>
            <person name="Hechtman P."/>
            <person name="Lo W."/>
            <person name="Scriver C.R."/>
            <person name="Mahuran D."/>
            <person name="Kaplan F."/>
        </authorList>
    </citation>
    <scope>VARIANT GM2G1 ARG-485</scope>
</reference>
<reference key="35">
    <citation type="journal article" date="1993" name="Am. J. Hum. Genet.">
        <title>A second mutation associated with apparent beta-hexosaminidase A pseudodeficiency: identification and frequency estimation.</title>
        <authorList>
            <person name="Cao Z."/>
            <person name="Natowicz M.R."/>
            <person name="Kaback M.M."/>
            <person name="Lim-Steele J.S.T."/>
            <person name="Prence E.M."/>
            <person name="Brown D."/>
            <person name="Chabot T."/>
            <person name="Triggs-Raine B.L."/>
        </authorList>
    </citation>
    <scope>VARIANT PSEUDODEFICIENCY TRP-249</scope>
</reference>
<reference key="36">
    <citation type="journal article" date="1993" name="Hum. Mol. Genet.">
        <title>Ten novel mutations in the HEXA gene in non-Jewish Tay-Sachs patients.</title>
        <authorList>
            <person name="Akli S."/>
            <person name="Chomel J.-C."/>
            <person name="Lacorte J.-M."/>
            <person name="Bachner L."/>
            <person name="Poenaru A."/>
            <person name="Poenaru L."/>
        </authorList>
    </citation>
    <scope>VARIANTS GM2G1</scope>
</reference>
<reference key="37">
    <citation type="journal article" date="1993" name="J. Med. Genet.">
        <title>Two new mutations in a late infantile Tay-Sachs patient are both in exon 1 of the beta-hexosaminidase alpha subunit gene.</title>
        <authorList>
            <person name="Harmon D.L."/>
            <person name="Gardner-Medwin D."/>
            <person name="Stirling J.L."/>
        </authorList>
    </citation>
    <scope>VARIANT GM2G1 SER-25</scope>
</reference>
<reference key="38">
    <citation type="journal article" date="1994" name="Hum. Mutat.">
        <title>Three novel beta-hexosaminidase A mutations in obligate carriers of Tay-Sachs disease.</title>
        <authorList>
            <person name="Tomczak J."/>
            <person name="Grebner E.E."/>
        </authorList>
    </citation>
    <scope>VARIANTS GM2G1 PHE-335 AND 347-ASP--GLU-352 DEL</scope>
</reference>
<reference key="39">
    <citation type="journal article" date="1994" name="J. Inherit. Metab. Dis.">
        <title>Molecular genetics of Tay-Sachs disease in Japan.</title>
        <authorList>
            <person name="Tanaka A."/>
            <person name="Sakazaki H."/>
            <person name="Murakami H."/>
            <person name="Isshiki G."/>
            <person name="Suzuki K."/>
        </authorList>
    </citation>
    <scope>VARIANTS GM2G1 TYR-458 AND GLN-484</scope>
</reference>
<reference key="40">
    <citation type="journal article" date="1995" name="Am. J. Hum. Genet.">
        <title>Mutational analyses of Tay-Sachs disease: studies on Tay-Sachs carriers of French Canadian background living in New England.</title>
        <authorList>
            <person name="Triggs-Raine B.L."/>
            <person name="Richard M."/>
            <person name="Wasel N."/>
            <person name="Prence E.M."/>
            <person name="Natowicz M.R."/>
        </authorList>
    </citation>
    <scope>VARIANTS GM2G1 SER-196 AND SER-250</scope>
</reference>
<reference key="41">
    <citation type="journal article" date="1995" name="Biochem. Mol. Med.">
        <title>GM2 gangliosidosis B1 variant: biochemical and molecular characterization of hexosaminidase A.</title>
        <authorList>
            <person name="Peleg L."/>
            <person name="Meltzer F."/>
            <person name="Karpati M."/>
            <person name="Goldman B."/>
        </authorList>
    </citation>
    <scope>VARIANT GM2G1 GLY-166</scope>
</reference>
<reference key="42">
    <citation type="journal article" date="1995" name="Neurology">
        <title>A new mutation in the HEXA gene associated with a spinal muscular atrophy phenotype.</title>
        <authorList>
            <person name="Navon R."/>
            <person name="Khosravi R."/>
            <person name="Korczyn T."/>
            <person name="Masson M."/>
            <person name="Sonnino S."/>
            <person name="Fardeau M."/>
            <person name="Eymard B."/>
            <person name="Lefevre N."/>
            <person name="Turpin J.C."/>
            <person name="Rondot P."/>
        </authorList>
    </citation>
    <scope>VARIANT GM2G1 MET-391</scope>
</reference>
<reference key="43">
    <citation type="journal article" date="1996" name="J. Med. Genet.">
        <title>Clinical, enzymatic, and molecular characterisation of a Portuguese family with a chronic form of GM2-gangliosidosis B1 variant.</title>
        <authorList>
            <person name="Ribeiro M.G."/>
            <person name="Sonin T."/>
            <person name="Pinto R.A."/>
            <person name="Fontes A."/>
            <person name="Ribeiro H."/>
            <person name="Pinto E."/>
            <person name="Palmeira M.M."/>
            <person name="Sa Miranda M.C."/>
        </authorList>
    </citation>
    <scope>VARIANTS GM2G1 HIS-178 AND HIS-252</scope>
</reference>
<reference key="44">
    <citation type="journal article" date="1996" name="Neurology">
        <title>Late-onset GM2 gangliosidosis: Ashkenazi Jewish family with an exon 5 mutation (Tyr180--&gt;His) in the Hex A alpha-chain gene.</title>
        <authorList>
            <person name="de Gasperi R."/>
            <person name="Gama Sosa M.A."/>
            <person name="Battistini S."/>
            <person name="Yeretsian J."/>
            <person name="Raghavan S."/>
            <person name="Zelnik N."/>
            <person name="Leshinsky E."/>
            <person name="Kolodny E.H."/>
        </authorList>
    </citation>
    <scope>VARIANT GM2G1 HIS-180</scope>
</reference>
<reference key="45">
    <citation type="journal article" date="1997" name="Am. J. Hum. Genet.">
        <title>Novel mutations and DNA-based screening in non-Jewish carriers of Tay-Sachs disease.</title>
        <authorList>
            <person name="Akerman B.R."/>
            <person name="Natowicz M.R."/>
            <person name="Kaback M.M."/>
            <person name="Loyer M."/>
            <person name="Campeau E."/>
            <person name="Gravel R.A."/>
        </authorList>
    </citation>
    <scope>VARIANTS GM2G1 PHE-127; PHE-226; ASP-269 AND VAL-314</scope>
</reference>
<reference key="46">
    <citation type="journal article" date="1997" name="Hum. Mutat.">
        <title>Tay-Sachs disease and HEXA mutations among Moroccan Jews.</title>
        <authorList>
            <person name="Kaufman M."/>
            <person name="Grinshpun-Cohen J."/>
            <person name="Karpati M."/>
            <person name="Peleg L."/>
            <person name="Goldman B."/>
            <person name="Akstein E."/>
            <person name="Adam A."/>
            <person name="Navon R."/>
        </authorList>
    </citation>
    <scope>VARIANTS GM2G1 GLN-170; PHE-304 DEL AND LYS-482</scope>
</reference>
<reference key="47">
    <citation type="journal article" date="1997" name="Hum. Mutat.">
        <title>Two novel (1334delC and 1363G to A, G455R) mutations in exon 12 of the beta-hexosaminidase alpha-chain gene in two Portuguese patients.</title>
        <authorList>
            <person name="Ribeiro M.G."/>
            <person name="Pinto R.A."/>
            <person name="Suzuki K."/>
            <person name="Sa Miranda M.C."/>
        </authorList>
    </citation>
    <scope>VARIANT GM2G1 ARG-455</scope>
</reference>
<reference key="48">
    <citation type="journal article" date="1997" name="Hum. Mutat.">
        <title>Two mutated HEXA alleles in a Druze patient with late-infantile Tay-Sachs disease.</title>
        <authorList>
            <person name="Drucker L."/>
            <person name="Hemli J.A."/>
            <person name="Navon R."/>
        </authorList>
    </citation>
    <scope>VARIANT GM2G1 PRO-279</scope>
</reference>
<reference key="49">
    <citation type="journal article" date="1998" name="Hum. Mutat.">
        <title>W474C amino acid substitution affects early processing of the alpha-subunit of beta-hexosaminidase A and is associated with subacute G(M2) gangliosidosis.</title>
        <authorList>
            <person name="Petroulakis E."/>
            <person name="Cao Z."/>
            <person name="Clarke J.T.R."/>
            <person name="Mahuran D.J."/>
            <person name="Lee G."/>
            <person name="Triggs-Raine B."/>
        </authorList>
    </citation>
    <scope>VARIANT GM2G1 CYS-474</scope>
</reference>
<reference key="50">
    <citation type="journal article" date="2003" name="J. Hum. Genet.">
        <title>Different attenuated phenotypes of GM2 gangliosidosis variant B in Japanese patients with HEXA mutations at codon 499, and five novel mutations responsible for infantile acute form.</title>
        <authorList>
            <person name="Tanaka A."/>
            <person name="Hoang L.T."/>
            <person name="Nishi Y."/>
            <person name="Maniwa S."/>
            <person name="Oka M."/>
            <person name="Yamano T."/>
        </authorList>
    </citation>
    <scope>VARIANTS GM2G1 LEU-252; SER-295; CYS-420; CYS-499 AND HIS-499</scope>
</reference>
<reference key="51">
    <citation type="journal article" date="2011" name="BMC Syst. Biol.">
        <title>Initial characterization of the human central proteome.</title>
        <authorList>
            <person name="Burkard T.R."/>
            <person name="Planyavsky M."/>
            <person name="Kaupe I."/>
            <person name="Breitwieser F.P."/>
            <person name="Buerckstuemmer T."/>
            <person name="Bennett K.L."/>
            <person name="Superti-Furga G."/>
            <person name="Colinge J."/>
        </authorList>
    </citation>
    <scope>VARIANT [LARGE SCALE ANALYSIS] VAL-436</scope>
    <scope>IDENTIFICATION BY MASS SPECTROMETRY [LARGE SCALE ANALYSIS]</scope>
</reference>
<reference key="52">
    <citation type="journal article" date="2012" name="PLoS ONE">
        <title>Identification of novel mutations in HEXA gene in children affected with Tay Sachs disease from India.</title>
        <authorList>
            <person name="Mistri M."/>
            <person name="Tamhankar P.M."/>
            <person name="Sheth F."/>
            <person name="Sanghavi D."/>
            <person name="Kondurkar P."/>
            <person name="Patil S."/>
            <person name="Idicula-Thomas S."/>
            <person name="Gupta S."/>
            <person name="Sheth J."/>
        </authorList>
    </citation>
    <scope>VARIANTS GM2G1 LYS-114; TRP-170; ASN-322; TYR-322; PRO-393; VAL-462 AND ARG-478</scope>
</reference>
<reference key="53">
    <citation type="journal article" date="2016" name="Mol. Biol. Cell">
        <title>Tay Sachs disease mutations in HEXA target the alpha chain of hexosaminidase A to ER-associated degradation.</title>
        <authorList>
            <person name="Dersh D."/>
            <person name="Iwamoto Y."/>
            <person name="Argon Y."/>
        </authorList>
    </citation>
    <scope>CHARACTERIZATION OF VARIANTS GM2G1 SER-269 AND LYS-482</scope>
</reference>
<protein>
    <recommendedName>
        <fullName evidence="46">Beta-hexosaminidase subunit alpha</fullName>
        <ecNumber evidence="1 30 34 43">3.2.1.52</ecNumber>
    </recommendedName>
    <alternativeName>
        <fullName>Beta-N-acetylhexosaminidase subunit alpha</fullName>
        <shortName>Hexosaminidase subunit A</shortName>
    </alternativeName>
    <alternativeName>
        <fullName>N-acetyl-beta-glucosaminidase subunit alpha</fullName>
    </alternativeName>
</protein>
<proteinExistence type="evidence at protein level"/>
<keyword id="KW-0002">3D-structure</keyword>
<keyword id="KW-0025">Alternative splicing</keyword>
<keyword id="KW-0903">Direct protein sequencing</keyword>
<keyword id="KW-0225">Disease variant</keyword>
<keyword id="KW-1015">Disulfide bond</keyword>
<keyword id="KW-0331">Gangliosidosis</keyword>
<keyword id="KW-0325">Glycoprotein</keyword>
<keyword id="KW-0326">Glycosidase</keyword>
<keyword id="KW-0378">Hydrolase</keyword>
<keyword id="KW-0443">Lipid metabolism</keyword>
<keyword id="KW-0458">Lysosome</keyword>
<keyword id="KW-0523">Neurodegeneration</keyword>
<keyword id="KW-1267">Proteomics identification</keyword>
<keyword id="KW-1185">Reference proteome</keyword>
<keyword id="KW-0732">Signal</keyword>
<keyword id="KW-0865">Zymogen</keyword>
<name>HEXA_HUMAN</name>
<gene>
    <name evidence="50" type="primary">HEXA</name>
</gene>
<feature type="signal peptide" evidence="21 47">
    <location>
        <begin position="1"/>
        <end position="22"/>
    </location>
</feature>
<feature type="propeptide" id="PRO_0000011993" evidence="22">
    <location>
        <begin position="23"/>
        <end position="88"/>
    </location>
</feature>
<feature type="chain" id="PRO_0000011994" description="Beta-hexosaminidase subunit alpha">
    <location>
        <begin position="89"/>
        <end position="529"/>
    </location>
</feature>
<feature type="region of interest" description="Critical for hydrolysis GM2 gangliosides">
    <location>
        <begin position="423"/>
        <end position="424"/>
    </location>
</feature>
<feature type="active site" description="Proton donor" evidence="48">
    <location>
        <position position="323"/>
    </location>
</feature>
<feature type="glycosylation site" description="N-linked (GlcNAc...) asparagine" evidence="8 10 47">
    <location>
        <position position="115"/>
    </location>
</feature>
<feature type="glycosylation site" description="N-linked (GlcNAc...) asparagine" evidence="8 10 14 47">
    <location>
        <position position="157"/>
    </location>
</feature>
<feature type="glycosylation site" description="N-linked (GlcNAc...) asparagine" evidence="8 10 14 47">
    <location>
        <position position="295"/>
    </location>
</feature>
<feature type="disulfide bond" evidence="10 47">
    <location>
        <begin position="58"/>
        <end position="104"/>
    </location>
</feature>
<feature type="disulfide bond" evidence="10 47">
    <location>
        <begin position="277"/>
        <end position="328"/>
    </location>
</feature>
<feature type="disulfide bond" evidence="10 47">
    <location>
        <begin position="505"/>
        <end position="522"/>
    </location>
</feature>
<feature type="splice variant" id="VSP_056657" description="In isoform 2." evidence="45">
    <location>
        <begin position="1"/>
        <end position="192"/>
    </location>
</feature>
<feature type="splice variant" id="VSP_056658" description="In isoform 2." evidence="45">
    <original>LL</original>
    <variation>YP</variation>
    <location>
        <begin position="359"/>
        <end position="360"/>
    </location>
</feature>
<feature type="splice variant" id="VSP_056659" description="In isoform 2." evidence="45">
    <location>
        <begin position="361"/>
        <end position="529"/>
    </location>
</feature>
<feature type="sequence variant" id="VAR_003202" description="In GM2G1; late infantile." evidence="31">
    <original>P</original>
    <variation>S</variation>
    <location>
        <position position="25"/>
    </location>
</feature>
<feature type="sequence variant" id="VAR_003203" description="In GM2G1; infantile; dbSNP:rs121907979." evidence="37">
    <original>L</original>
    <variation>R</variation>
    <location>
        <position position="39"/>
    </location>
</feature>
<feature type="sequence variant" id="VAR_077497" description="In GM2G1; uncertain significance; dbSNP:rs748190164." evidence="17">
    <original>E</original>
    <variation>K</variation>
    <location>
        <position position="114"/>
    </location>
</feature>
<feature type="sequence variant" id="VAR_022439" description="In GM2G1." evidence="38">
    <original>L</original>
    <variation>F</variation>
    <location>
        <position position="127"/>
    </location>
</feature>
<feature type="sequence variant" id="VAR_003204" description="In GM2G1; infantile; dbSNP:rs121907975." evidence="37">
    <original>L</original>
    <variation>R</variation>
    <location>
        <position position="127"/>
    </location>
</feature>
<feature type="sequence variant" id="VAR_003205" description="In GM2G1; late infantile." evidence="33">
    <original>R</original>
    <variation>G</variation>
    <location>
        <position position="166"/>
    </location>
</feature>
<feature type="sequence variant" id="VAR_003206" description="In GM2G1; infantile; inactive or unstable protein; dbSNP:rs121907957." evidence="39">
    <original>R</original>
    <variation>Q</variation>
    <location>
        <position position="170"/>
    </location>
</feature>
<feature type="sequence variant" id="VAR_003207" description="In GM2G1; infantile; dbSNP:rs121907972." evidence="4 17">
    <original>R</original>
    <variation>W</variation>
    <location>
        <position position="170"/>
    </location>
</feature>
<feature type="sequence variant" id="VAR_003208" description="In GM2G1; infantile; inactive protein; dbSNP:rs121907953." evidence="37">
    <original>R</original>
    <variation>C</variation>
    <location>
        <position position="178"/>
    </location>
</feature>
<feature type="sequence variant" id="VAR_003209" description="In GM2G1; infantile; inactive protein; dbSNP:rs28941770." evidence="35 37">
    <original>R</original>
    <variation>H</variation>
    <location>
        <position position="178"/>
    </location>
</feature>
<feature type="sequence variant" id="VAR_003210" description="In GM2G1; infantile; dbSNP:rs28941770." evidence="37">
    <original>R</original>
    <variation>L</variation>
    <location>
        <position position="178"/>
    </location>
</feature>
<feature type="sequence variant" id="VAR_003211" description="In GM2G1; dbSNP:rs28941771." evidence="36">
    <original>Y</original>
    <variation>H</variation>
    <location>
        <position position="180"/>
    </location>
</feature>
<feature type="sequence variant" id="VAR_003212" description="In GM2G1; infantile; dbSNP:rs387906310." evidence="37">
    <original>V</original>
    <variation>L</variation>
    <location>
        <position position="192"/>
    </location>
</feature>
<feature type="sequence variant" id="VAR_003213" description="In GM2G1; dbSNP:rs753862880." evidence="25">
    <original>N</original>
    <variation>S</variation>
    <location>
        <position position="196"/>
    </location>
</feature>
<feature type="sequence variant" id="VAR_003214" description="In GM2G1; dbSNP:rs121907973." evidence="37">
    <original>K</original>
    <variation>T</variation>
    <location>
        <position position="197"/>
    </location>
</feature>
<feature type="sequence variant" id="VAR_003215" description="In GM2G1; dbSNP:rs1800429." evidence="37">
    <original>V</original>
    <variation>M</variation>
    <location>
        <position position="200"/>
    </location>
</feature>
<feature type="sequence variant" id="VAR_003216" description="In GM2G1; infantile; dbSNP:rs121907976." evidence="37">
    <original>H</original>
    <variation>R</variation>
    <location>
        <position position="204"/>
    </location>
</feature>
<feature type="sequence variant" id="VAR_003217" description="In GM2G1; infantile; dbSNP:rs121907961." evidence="13">
    <original>S</original>
    <variation>F</variation>
    <location>
        <position position="210"/>
    </location>
</feature>
<feature type="sequence variant" id="VAR_003218" description="In GM2G1; infantile; dbSNP:rs121907974." evidence="37">
    <original>F</original>
    <variation>S</variation>
    <location>
        <position position="211"/>
    </location>
</feature>
<feature type="sequence variant" id="VAR_022440" description="In GM2G1; dbSNP:rs769866128." evidence="38">
    <original>S</original>
    <variation>F</variation>
    <location>
        <position position="226"/>
    </location>
</feature>
<feature type="sequence variant" id="VAR_003219" description="In HEXA pseudodeficiency; dbSNP:rs121907970." evidence="5">
    <original>R</original>
    <variation>W</variation>
    <location>
        <position position="247"/>
    </location>
</feature>
<feature type="sequence variant" id="VAR_003220" description="In HEXA pseudodeficiency; dbSNP:rs138058578." evidence="11 28">
    <original>R</original>
    <variation>W</variation>
    <location>
        <position position="249"/>
    </location>
</feature>
<feature type="sequence variant" id="VAR_003221" description="In GM2G1; juvenile; dbSNP:rs121907959." evidence="2">
    <original>G</original>
    <variation>D</variation>
    <location>
        <position position="250"/>
    </location>
</feature>
<feature type="sequence variant" id="VAR_003222" description="In GM2G1; dbSNP:rs1057521137." evidence="25">
    <original>G</original>
    <variation>S</variation>
    <location>
        <position position="250"/>
    </location>
</feature>
<feature type="sequence variant" id="VAR_003223" description="In GM2G1; dbSNP:rs762255098." evidence="35">
    <original>R</original>
    <variation>H</variation>
    <location>
        <position position="252"/>
    </location>
</feature>
<feature type="sequence variant" id="VAR_017188" description="In GM2G1." evidence="6">
    <original>R</original>
    <variation>L</variation>
    <location>
        <position position="252"/>
    </location>
</feature>
<feature type="sequence variant" id="VAR_003224" description="In GM2G1; infantile; dbSNP:rs121907971." evidence="4">
    <original>D</original>
    <variation>H</variation>
    <location>
        <position position="258"/>
    </location>
</feature>
<feature type="sequence variant" id="VAR_022441" description="In GM2G1; dbSNP:rs2088664194." evidence="38">
    <original>G</original>
    <variation>D</variation>
    <location>
        <position position="269"/>
    </location>
</feature>
<feature type="sequence variant" id="VAR_003225" description="In GM2G1; late onset; inhibited subunit dissociation; loss of processing to a mature form; increased degradation; dbSNP:rs121907954." evidence="18 19">
    <original>G</original>
    <variation>S</variation>
    <location>
        <position position="269"/>
    </location>
</feature>
<feature type="sequence variant" id="VAR_003226" description="In GM2G1; late infantile." evidence="41">
    <original>S</original>
    <variation>P</variation>
    <location>
        <position position="279"/>
    </location>
</feature>
<feature type="sequence variant" id="VAR_058477" description="In dbSNP:rs1054374.">
    <original>S</original>
    <variation>I</variation>
    <location>
        <position position="293"/>
    </location>
</feature>
<feature type="sequence variant" id="VAR_017189" description="In GM2G1; dbSNP:rs199578185." evidence="6">
    <original>N</original>
    <variation>S</variation>
    <location>
        <position position="295"/>
    </location>
</feature>
<feature type="sequence variant" id="VAR_003227" description="In GM2G1; infantile; dbSNP:rs121907977.">
    <original>M</original>
    <variation>R</variation>
    <location>
        <position position="301"/>
    </location>
</feature>
<feature type="sequence variant" id="VAR_003228" description="In GM2G1; infantile; Moroccan Jewish; dbSNP:rs121907960." evidence="39">
    <location>
        <position position="304"/>
    </location>
</feature>
<feature type="sequence variant" id="VAR_022442" description="In GM2G1; dbSNP:rs1555472696." evidence="38">
    <original>D</original>
    <variation>V</variation>
    <location>
        <position position="314"/>
    </location>
</feature>
<feature type="sequence variant" id="VAR_003229" description="In GM2G1; late infantile; dbSNP:rs797044434." evidence="7">
    <location>
        <position position="320"/>
    </location>
</feature>
<feature type="sequence variant" id="VAR_077498" description="In GM2G1; dbSNP:rs772180415." evidence="17">
    <original>D</original>
    <variation>N</variation>
    <location>
        <position position="322"/>
    </location>
</feature>
<feature type="sequence variant" id="VAR_077499" description="In GM2G1; dbSNP:rs772180415." evidence="17">
    <original>D</original>
    <variation>Y</variation>
    <location>
        <position position="322"/>
    </location>
</feature>
<feature type="sequence variant" id="VAR_003230" description="In GM2G1; dbSNP:rs1555472604." evidence="29">
    <original>I</original>
    <variation>F</variation>
    <location>
        <position position="335"/>
    </location>
</feature>
<feature type="sequence variant" id="VAR_003231" description="In GM2G1." evidence="29">
    <location>
        <begin position="347"/>
        <end position="352"/>
    </location>
</feature>
<feature type="sequence variant" id="VAR_003232" description="In GM2G1; mild; dbSNP:rs2140320821." evidence="27">
    <original>V</original>
    <variation>M</variation>
    <location>
        <position position="391"/>
    </location>
</feature>
<feature type="sequence variant" id="VAR_077500" description="In GM2G1; dbSNP:rs370266293." evidence="17">
    <original>R</original>
    <variation>P</variation>
    <location>
        <position position="393"/>
    </location>
</feature>
<feature type="sequence variant" id="VAR_003233" description="In dbSNP:rs1800430." evidence="7">
    <original>N</original>
    <variation>D</variation>
    <location>
        <position position="399"/>
    </location>
</feature>
<feature type="sequence variant" id="VAR_003234" description="In GM2G1; infantile; inactive protein; dbSNP:rs121907958." evidence="6 16">
    <original>W</original>
    <variation>C</variation>
    <location>
        <position position="420"/>
    </location>
</feature>
<feature type="sequence variant" id="VAR_003235" description="In dbSNP:rs1800431." evidence="7 9 11 12 20 21 24 44 51">
    <original>I</original>
    <variation>V</variation>
    <location>
        <position position="436"/>
    </location>
</feature>
<feature type="sequence variant" id="VAR_003236" description="In GM2G1; infantile; dbSNP:rs121907978." evidence="37">
    <original>G</original>
    <variation>S</variation>
    <location>
        <position position="454"/>
    </location>
</feature>
<feature type="sequence variant" id="VAR_003237" description="In GM2G1; late infantile." evidence="40">
    <original>G</original>
    <variation>R</variation>
    <location>
        <position position="455"/>
    </location>
</feature>
<feature type="sequence variant" id="VAR_003238" description="In GM2G1; infantile; dbSNP:rs2088612348." evidence="26">
    <original>C</original>
    <variation>Y</variation>
    <location>
        <position position="458"/>
    </location>
</feature>
<feature type="sequence variant" id="VAR_077501" description="In GM2G1; dbSNP:rs863225434." evidence="17">
    <original>E</original>
    <variation>V</variation>
    <location>
        <position position="462"/>
    </location>
</feature>
<feature type="sequence variant" id="VAR_003239" description="In GM2G1; subacute; dbSNP:rs121907981." evidence="42">
    <original>W</original>
    <variation>C</variation>
    <location>
        <position position="474"/>
    </location>
</feature>
<feature type="sequence variant" id="VAR_077502" description="In GM2G1; dbSNP:rs1057519467." evidence="17">
    <original>G</original>
    <variation>R</variation>
    <location>
        <position position="478"/>
    </location>
</feature>
<feature type="sequence variant" id="VAR_003240" description="In GM2G1; infantile; loss of processing to a mature form; increased degradation; dbSNP:rs121907952." evidence="19 23 39">
    <original>E</original>
    <variation>K</variation>
    <location>
        <position position="482"/>
    </location>
</feature>
<feature type="sequence variant" id="VAR_003241" description="In GM2G1; infantile." evidence="26">
    <original>L</original>
    <variation>Q</variation>
    <location>
        <position position="484"/>
    </location>
</feature>
<feature type="sequence variant" id="VAR_003242" description="In GM2G1; infantile; dbSNP:rs121907968." evidence="3">
    <original>W</original>
    <variation>R</variation>
    <location>
        <position position="485"/>
    </location>
</feature>
<feature type="sequence variant" id="VAR_003243" description="In GM2G1; infantile; dbSNP:rs121907966." evidence="6">
    <original>R</original>
    <variation>C</variation>
    <location>
        <position position="499"/>
    </location>
</feature>
<feature type="sequence variant" id="VAR_003244" description="In GM2G1; juvenile; dbSNP:rs121907956." evidence="6">
    <original>R</original>
    <variation>H</variation>
    <location>
        <position position="499"/>
    </location>
</feature>
<feature type="sequence variant" id="VAR_003245" description="In GM2G1; infantile; dbSNP:rs28942071." evidence="13">
    <original>R</original>
    <variation>C</variation>
    <location>
        <position position="504"/>
    </location>
</feature>
<feature type="sequence variant" id="VAR_003246" description="In GM2G1; juvenile; fails to associate with the beta-subunit to form the enzymatically active heterodimer; dbSNP:rs121907955." evidence="15">
    <original>R</original>
    <variation>H</variation>
    <location>
        <position position="504"/>
    </location>
</feature>
<feature type="mutagenesis site" description="No change of the catalytic activity associated with the alpha-chain. No catalytic activity associated with the alpha-chain; when associated with Q-157 and Q-295." evidence="8">
    <original>N</original>
    <variation>Q</variation>
    <location>
        <position position="115"/>
    </location>
</feature>
<feature type="mutagenesis site" description="No change of the catalytic activity associated with the alpha-chain. No catalytic activity associated with the alpha-chain; when associated with Q-115 and Q-295." evidence="8">
    <original>N</original>
    <variation>Q</variation>
    <location>
        <position position="157"/>
    </location>
</feature>
<feature type="mutagenesis site" description="No change of the catalytic activity associated with the alpha-chain. No catalytic activity associated with the alpha-chain; when associated with Q-115 and Q-157." evidence="8">
    <original>N</original>
    <variation>Q</variation>
    <location>
        <position position="295"/>
    </location>
</feature>
<feature type="sequence conflict" description="In Ref. 5; BAD96222." evidence="46" ref="5">
    <original>S</original>
    <variation>P</variation>
    <location>
        <position position="331"/>
    </location>
</feature>
<feature type="strand" evidence="52">
    <location>
        <begin position="28"/>
        <end position="31"/>
    </location>
</feature>
<feature type="strand" evidence="52">
    <location>
        <begin position="36"/>
        <end position="39"/>
    </location>
</feature>
<feature type="turn" evidence="52">
    <location>
        <begin position="41"/>
        <end position="43"/>
    </location>
</feature>
<feature type="strand" evidence="52">
    <location>
        <begin position="45"/>
        <end position="48"/>
    </location>
</feature>
<feature type="helix" evidence="52">
    <location>
        <begin position="59"/>
        <end position="73"/>
    </location>
</feature>
<feature type="strand" evidence="52">
    <location>
        <begin position="93"/>
        <end position="100"/>
    </location>
</feature>
<feature type="strand" evidence="52">
    <location>
        <begin position="104"/>
        <end position="106"/>
    </location>
</feature>
<feature type="strand" evidence="52">
    <location>
        <begin position="116"/>
        <end position="123"/>
    </location>
</feature>
<feature type="strand" evidence="52">
    <location>
        <begin position="125"/>
        <end position="131"/>
    </location>
</feature>
<feature type="helix" evidence="52">
    <location>
        <begin position="132"/>
        <end position="145"/>
    </location>
</feature>
<feature type="strand" evidence="52">
    <location>
        <begin position="146"/>
        <end position="148"/>
    </location>
</feature>
<feature type="strand" evidence="52">
    <location>
        <begin position="154"/>
        <end position="157"/>
    </location>
</feature>
<feature type="strand" evidence="52">
    <location>
        <begin position="159"/>
        <end position="163"/>
    </location>
</feature>
<feature type="strand" evidence="52">
    <location>
        <begin position="168"/>
        <end position="175"/>
    </location>
</feature>
<feature type="turn" evidence="52">
    <location>
        <begin position="176"/>
        <end position="178"/>
    </location>
</feature>
<feature type="helix" evidence="52">
    <location>
        <begin position="183"/>
        <end position="195"/>
    </location>
</feature>
<feature type="strand" evidence="52">
    <location>
        <begin position="200"/>
        <end position="204"/>
    </location>
</feature>
<feature type="strand" evidence="53">
    <location>
        <begin position="216"/>
        <end position="218"/>
    </location>
</feature>
<feature type="helix" evidence="52">
    <location>
        <begin position="220"/>
        <end position="225"/>
    </location>
</feature>
<feature type="strand" evidence="53">
    <location>
        <begin position="226"/>
        <end position="228"/>
    </location>
</feature>
<feature type="turn" evidence="52">
    <location>
        <begin position="229"/>
        <end position="231"/>
    </location>
</feature>
<feature type="helix" evidence="52">
    <location>
        <begin position="236"/>
        <end position="248"/>
    </location>
</feature>
<feature type="strand" evidence="52">
    <location>
        <begin position="252"/>
        <end position="256"/>
    </location>
</feature>
<feature type="strand" evidence="52">
    <location>
        <begin position="260"/>
        <end position="262"/>
    </location>
</feature>
<feature type="turn" evidence="52">
    <location>
        <begin position="264"/>
        <end position="269"/>
    </location>
</feature>
<feature type="strand" evidence="52">
    <location>
        <begin position="274"/>
        <end position="290"/>
    </location>
</feature>
<feature type="helix" evidence="52">
    <location>
        <begin position="295"/>
        <end position="311"/>
    </location>
</feature>
<feature type="strand" evidence="52">
    <location>
        <begin position="314"/>
        <end position="318"/>
    </location>
</feature>
<feature type="helix" evidence="52">
    <location>
        <begin position="327"/>
        <end position="331"/>
    </location>
</feature>
<feature type="helix" evidence="52">
    <location>
        <begin position="333"/>
        <end position="341"/>
    </location>
</feature>
<feature type="helix" evidence="52">
    <location>
        <begin position="349"/>
        <end position="364"/>
    </location>
</feature>
<feature type="turn" evidence="52">
    <location>
        <begin position="365"/>
        <end position="367"/>
    </location>
</feature>
<feature type="strand" evidence="52">
    <location>
        <begin position="369"/>
        <end position="373"/>
    </location>
</feature>
<feature type="helix" evidence="52">
    <location>
        <begin position="374"/>
        <end position="378"/>
    </location>
</feature>
<feature type="strand" evidence="52">
    <location>
        <begin position="388"/>
        <end position="391"/>
    </location>
</feature>
<feature type="strand" evidence="52">
    <location>
        <begin position="394"/>
        <end position="398"/>
    </location>
</feature>
<feature type="helix" evidence="52">
    <location>
        <begin position="400"/>
        <end position="409"/>
    </location>
</feature>
<feature type="strand" evidence="52">
    <location>
        <begin position="413"/>
        <end position="416"/>
    </location>
</feature>
<feature type="strand" evidence="52">
    <location>
        <begin position="426"/>
        <end position="428"/>
    </location>
</feature>
<feature type="helix" evidence="52">
    <location>
        <begin position="431"/>
        <end position="436"/>
    </location>
</feature>
<feature type="helix" evidence="52">
    <location>
        <begin position="446"/>
        <end position="449"/>
    </location>
</feature>
<feature type="strand" evidence="52">
    <location>
        <begin position="452"/>
        <end position="459"/>
    </location>
</feature>
<feature type="turn" evidence="52">
    <location>
        <begin position="466"/>
        <end position="468"/>
    </location>
</feature>
<feature type="helix" evidence="52">
    <location>
        <begin position="469"/>
        <end position="473"/>
    </location>
</feature>
<feature type="helix" evidence="52">
    <location>
        <begin position="476"/>
        <end position="485"/>
    </location>
</feature>
<feature type="helix" evidence="52">
    <location>
        <begin position="493"/>
        <end position="509"/>
    </location>
</feature>
<feature type="strand" evidence="52">
    <location>
        <begin position="517"/>
        <end position="519"/>
    </location>
</feature>
<evidence type="ECO:0000269" key="1">
    <source>
    </source>
</evidence>
<evidence type="ECO:0000269" key="2">
    <source>
    </source>
</evidence>
<evidence type="ECO:0000269" key="3">
    <source>
    </source>
</evidence>
<evidence type="ECO:0000269" key="4">
    <source>
    </source>
</evidence>
<evidence type="ECO:0000269" key="5">
    <source>
    </source>
</evidence>
<evidence type="ECO:0000269" key="6">
    <source>
    </source>
</evidence>
<evidence type="ECO:0000269" key="7">
    <source>
    </source>
</evidence>
<evidence type="ECO:0000269" key="8">
    <source>
    </source>
</evidence>
<evidence type="ECO:0000269" key="9">
    <source>
    </source>
</evidence>
<evidence type="ECO:0000269" key="10">
    <source>
    </source>
</evidence>
<evidence type="ECO:0000269" key="11">
    <source>
    </source>
</evidence>
<evidence type="ECO:0000269" key="12">
    <source>
    </source>
</evidence>
<evidence type="ECO:0000269" key="13">
    <source>
    </source>
</evidence>
<evidence type="ECO:0000269" key="14">
    <source>
    </source>
</evidence>
<evidence type="ECO:0000269" key="15">
    <source>
    </source>
</evidence>
<evidence type="ECO:0000269" key="16">
    <source>
    </source>
</evidence>
<evidence type="ECO:0000269" key="17">
    <source>
    </source>
</evidence>
<evidence type="ECO:0000269" key="18">
    <source>
    </source>
</evidence>
<evidence type="ECO:0000269" key="19">
    <source>
    </source>
</evidence>
<evidence type="ECO:0000269" key="20">
    <source>
    </source>
</evidence>
<evidence type="ECO:0000269" key="21">
    <source>
    </source>
</evidence>
<evidence type="ECO:0000269" key="22">
    <source>
    </source>
</evidence>
<evidence type="ECO:0000269" key="23">
    <source>
    </source>
</evidence>
<evidence type="ECO:0000269" key="24">
    <source>
    </source>
</evidence>
<evidence type="ECO:0000269" key="25">
    <source>
    </source>
</evidence>
<evidence type="ECO:0000269" key="26">
    <source>
    </source>
</evidence>
<evidence type="ECO:0000269" key="27">
    <source>
    </source>
</evidence>
<evidence type="ECO:0000269" key="28">
    <source>
    </source>
</evidence>
<evidence type="ECO:0000269" key="29">
    <source>
    </source>
</evidence>
<evidence type="ECO:0000269" key="30">
    <source>
    </source>
</evidence>
<evidence type="ECO:0000269" key="31">
    <source>
    </source>
</evidence>
<evidence type="ECO:0000269" key="32">
    <source>
    </source>
</evidence>
<evidence type="ECO:0000269" key="33">
    <source>
    </source>
</evidence>
<evidence type="ECO:0000269" key="34">
    <source>
    </source>
</evidence>
<evidence type="ECO:0000269" key="35">
    <source>
    </source>
</evidence>
<evidence type="ECO:0000269" key="36">
    <source>
    </source>
</evidence>
<evidence type="ECO:0000269" key="37">
    <source>
    </source>
</evidence>
<evidence type="ECO:0000269" key="38">
    <source>
    </source>
</evidence>
<evidence type="ECO:0000269" key="39">
    <source>
    </source>
</evidence>
<evidence type="ECO:0000269" key="40">
    <source>
    </source>
</evidence>
<evidence type="ECO:0000269" key="41">
    <source>
    </source>
</evidence>
<evidence type="ECO:0000269" key="42">
    <source>
    </source>
</evidence>
<evidence type="ECO:0000269" key="43">
    <source>
    </source>
</evidence>
<evidence type="ECO:0000269" key="44">
    <source ref="5"/>
</evidence>
<evidence type="ECO:0000303" key="45">
    <source>
    </source>
</evidence>
<evidence type="ECO:0000305" key="46"/>
<evidence type="ECO:0000305" key="47">
    <source>
    </source>
</evidence>
<evidence type="ECO:0000305" key="48">
    <source>
    </source>
</evidence>
<evidence type="ECO:0000305" key="49">
    <source>
    </source>
</evidence>
<evidence type="ECO:0000312" key="50">
    <source>
        <dbReference type="HGNC" id="HGNC:4878"/>
    </source>
</evidence>
<evidence type="ECO:0007744" key="51">
    <source>
    </source>
</evidence>
<evidence type="ECO:0007829" key="52">
    <source>
        <dbReference type="PDB" id="2GJX"/>
    </source>
</evidence>
<evidence type="ECO:0007829" key="53">
    <source>
        <dbReference type="PDB" id="2GK1"/>
    </source>
</evidence>